<accession>Q9Q6P4</accession>
<comment type="function">
    <molecule>Capsid protein C</molecule>
    <text evidence="6 27">Plays a role in virus budding by binding to the cell membrane and gathering the viral RNA into a nucleocapsid that forms the core of a mature virus particle (PubMed:22925334). During virus entry, may induce genome penetration into the host cytoplasm after hemifusion induced by the surface proteins. Can migrate to the cell nucleus where it modulates host functions. Overcomes the anti-viral effects of host EXOC1 by sequestering and degrading the latter through the proteasome degradation pathway.</text>
</comment>
<comment type="function">
    <molecule>Capsid protein C</molecule>
    <text evidence="1">Inhibits RNA silencing by interfering with host Dicer.</text>
</comment>
<comment type="function">
    <molecule>Peptide pr</molecule>
    <text evidence="6">Prevents premature fusion activity of envelope proteins in trans-Golgi by binding to envelope protein E at pH6.0. After virion release in extracellular space, gets dissociated from E dimers.</text>
</comment>
<comment type="function">
    <molecule>Protein prM</molecule>
    <text evidence="6">Acts as a chaperone for envelope protein E during intracellular virion assembly by masking and inactivating envelope protein E fusion peptide. prM is the only viral peptide matured by host furin in the trans-Golgi network probably to avoid catastrophic activation of the viral fusion activity in acidic Golgi compartment prior to virion release. prM-E cleavage is inefficient, and many virions are only partially matured. These uncleaved prM would play a role in immune evasion.</text>
</comment>
<comment type="function">
    <molecule>Small envelope protein M</molecule>
    <text evidence="6">May play a role in virus budding. Exerts cytotoxic effects by activating a mitochondrial apoptotic pathway through M ectodomain. May display a viroporin activity.</text>
</comment>
<comment type="function">
    <molecule>Envelope protein E</molecule>
    <text evidence="6">Binds to host cell surface receptor and mediates fusion between viral and cellular membranes. Envelope protein is synthesized in the endoplasmic reticulum in the form of heterodimer with protein prM. They play a role in virion budding in the ER, and the newly formed immature particle is covered with 60 spikes composed of heterodimer between precursor prM and envelope protein E. The virion is transported to the Golgi apparatus where the low pH causes dissociation of PrM-E heterodimers and formation of E homodimers. prM-E cleavage is inefficient, and many virions are only partially matured. These uncleaved prM would play a role in immune evasion.</text>
</comment>
<comment type="function">
    <molecule>Non-structural protein 1</molecule>
    <text evidence="18 28 29 32 33">Involved in immune evasion, pathogenesis and viral replication. Once cleaved off the polyprotein, is targeted to three destinations: the viral replication cycle, the plasma membrane and the extracellular compartment. Essential for viral replication. Required for formation of the replication complex and recruitment of other non-structural proteins to the ER-derived membrane structures. Excreted as a hexameric lipoparticle that plays a role against host immune response. Antagonizing the complement function. Binds to the host macrophages and dendritic cells. Inhibits signal transduction originating from Toll-like receptor 3 (TLR3).</text>
</comment>
<comment type="function">
    <molecule>Non-structural protein 2A</molecule>
    <text evidence="3">Component of the viral RNA replication complex that functions in virion assembly and antagonizes the host alpha/beta interferon antiviral response.</text>
</comment>
<comment type="function">
    <molecule>Serine protease subunit NS2B</molecule>
    <text evidence="6 13">Required cofactor for the serine protease function of NS3. May have membrane-destabilizing activity and form viroporins (By similarity).</text>
</comment>
<comment type="function">
    <molecule>Serine protease/Helicase NS3</molecule>
    <text evidence="3 14 34">Displays three enzymatic activities: serine protease, NTPase and RNA helicase. NS3 serine protease, in association with NS2B, performs its autocleavage and cleaves the polyprotein at dibasic sites in the cytoplasm: C-prM, NS2A-NS2B, NS2B-NS3, NS3-NS4A, NS4A-2K and NS4B-NS5. NS3 RNA helicase binds RNA and unwinds dsRNA in the 3' to 5' direction (By similarity). NS3 supports the separation of RNA daughter and template strands during viral replication. The helicase part is involved in the inhibition of phosphorylation of host STAT1, and thereby inhibition of host type-I IFN signaling (PubMed:29099073). In addition, NS3 assists the initiation of replication by unwinding the RNA secondary structure in the 3' non-translated region (NTR). Inhibits STAT2 translocation in the nucleus after IFN-alpha treatment (By similarity).</text>
</comment>
<comment type="function">
    <molecule>Non-structural protein 4A</molecule>
    <text evidence="20 35">Facilitates host membrane remodelling necessary for viral replication by interacting with host RTN3. Regulates the ATPase activity of the NS3 helicase activity. NS4A allows NS3 helicase to conserve energy during unwinding.</text>
</comment>
<comment type="function">
    <molecule>Peptide 2k</molecule>
    <text evidence="6">Functions as a signal peptide for NS4B and is required for the interferon antagonism activity of the latter.</text>
</comment>
<comment type="function">
    <molecule>Non-structural protein 4B</molecule>
    <text evidence="17 29">Induces the formation of ER-derived membrane vesicles where the viral replication takes place (PubMed:24465392). Inhibits interferon (IFN)-induced host STAT1 phosphorylation and nuclear translocation, thereby preventing the establishment of cellular antiviral state by blocking the IFN-alpha/beta pathway (PubMed:15956546). Inhibits STAT2 translocation in the nucleus after IFN-alpha treatment (PubMed:15956546).</text>
</comment>
<comment type="function">
    <molecule>RNA-directed RNA polymerase NS5</molecule>
    <text evidence="16 22 23 24">Replicates the viral (+) and (-) genome, and performs the capping of genomes in the cytoplasm (PubMed:19850911). NS5 methylates viral RNA cap at guanine N-7 and ribose 2'-O positions (PubMed:19850911, PubMed:20685660). Besides its role in RNA genome replication, also prevents the establishment of cellular antiviral state by blocking the interferon-alpha/beta (IFN-alpha/beta) signaling pathway (PubMed:20106931). Inhibits host JAK1 and TYK2 phosphorylation, thereby preventing activation of JAK-STAT signaling pathway (PubMed:15650160).</text>
</comment>
<comment type="catalytic activity">
    <reaction>
        <text>Selective hydrolysis of -Xaa-Xaa-|-Yaa- bonds in which each of the Xaa can be either Arg or Lys and Yaa can be either Ser or Ala.</text>
        <dbReference type="EC" id="3.4.21.91"/>
    </reaction>
</comment>
<comment type="catalytic activity">
    <reaction evidence="10">
        <text>RNA(n) + a ribonucleoside 5'-triphosphate = RNA(n+1) + diphosphate</text>
        <dbReference type="Rhea" id="RHEA:21248"/>
        <dbReference type="Rhea" id="RHEA-COMP:14527"/>
        <dbReference type="Rhea" id="RHEA-COMP:17342"/>
        <dbReference type="ChEBI" id="CHEBI:33019"/>
        <dbReference type="ChEBI" id="CHEBI:61557"/>
        <dbReference type="ChEBI" id="CHEBI:140395"/>
        <dbReference type="EC" id="2.7.7.48"/>
    </reaction>
</comment>
<comment type="catalytic activity">
    <reaction>
        <text>a ribonucleoside 5'-triphosphate + H2O = a ribonucleoside 5'-diphosphate + phosphate + H(+)</text>
        <dbReference type="Rhea" id="RHEA:23680"/>
        <dbReference type="ChEBI" id="CHEBI:15377"/>
        <dbReference type="ChEBI" id="CHEBI:15378"/>
        <dbReference type="ChEBI" id="CHEBI:43474"/>
        <dbReference type="ChEBI" id="CHEBI:57930"/>
        <dbReference type="ChEBI" id="CHEBI:61557"/>
        <dbReference type="EC" id="3.6.1.15"/>
    </reaction>
</comment>
<comment type="catalytic activity">
    <reaction evidence="20">
        <text>ATP + H2O = ADP + phosphate + H(+)</text>
        <dbReference type="Rhea" id="RHEA:13065"/>
        <dbReference type="ChEBI" id="CHEBI:15377"/>
        <dbReference type="ChEBI" id="CHEBI:15378"/>
        <dbReference type="ChEBI" id="CHEBI:30616"/>
        <dbReference type="ChEBI" id="CHEBI:43474"/>
        <dbReference type="ChEBI" id="CHEBI:456216"/>
        <dbReference type="EC" id="3.6.4.13"/>
    </reaction>
</comment>
<comment type="catalytic activity">
    <molecule>RNA-directed RNA polymerase NS5</molecule>
    <reaction evidence="15 22 24">
        <text>a 5'-end (5'-triphosphoguanosine)-ribonucleoside in mRNA + S-adenosyl-L-methionine = a 5'-end (N(7)-methyl 5'-triphosphoguanosine)-ribonucleoside in mRNA + S-adenosyl-L-homocysteine</text>
        <dbReference type="Rhea" id="RHEA:67008"/>
        <dbReference type="Rhea" id="RHEA-COMP:17166"/>
        <dbReference type="Rhea" id="RHEA-COMP:17167"/>
        <dbReference type="ChEBI" id="CHEBI:57856"/>
        <dbReference type="ChEBI" id="CHEBI:59789"/>
        <dbReference type="ChEBI" id="CHEBI:156461"/>
        <dbReference type="ChEBI" id="CHEBI:167617"/>
        <dbReference type="EC" id="2.1.1.56"/>
    </reaction>
</comment>
<comment type="catalytic activity">
    <molecule>RNA-directed RNA polymerase NS5</molecule>
    <reaction evidence="15 22 24">
        <text>a 5'-end (N(7)-methyl 5'-triphosphoguanosine)-ribonucleoside in mRNA + S-adenosyl-L-methionine = a 5'-end (N(7)-methyl 5'-triphosphoguanosine)-(2'-O-methyl-ribonucleoside) in mRNA + S-adenosyl-L-homocysteine + H(+)</text>
        <dbReference type="Rhea" id="RHEA:67020"/>
        <dbReference type="Rhea" id="RHEA-COMP:17167"/>
        <dbReference type="Rhea" id="RHEA-COMP:17168"/>
        <dbReference type="ChEBI" id="CHEBI:15378"/>
        <dbReference type="ChEBI" id="CHEBI:57856"/>
        <dbReference type="ChEBI" id="CHEBI:59789"/>
        <dbReference type="ChEBI" id="CHEBI:156461"/>
        <dbReference type="ChEBI" id="CHEBI:167609"/>
        <dbReference type="EC" id="2.1.1.57"/>
    </reaction>
</comment>
<comment type="subunit">
    <molecule>Capsid protein C</molecule>
    <text evidence="6">Homodimer (By similarity). Interacts (via N-terminus) with host EXOC1 (via C-terminus); this interaction results in EXOC1 degradation through the proteasome degradation pathway (By similarity). Interacts with host DDX56; this interaction plays an important role in genomic RNA encapsidation (PubMed:22925334).</text>
</comment>
<comment type="subunit">
    <molecule>Protein prM</molecule>
    <text evidence="6">Forms heterodimers with envelope protein E in the endoplasmic reticulum and Golgi (By similarity).</text>
</comment>
<comment type="subunit">
    <molecule>Envelope protein E</molecule>
    <text evidence="25">Homodimer; in the endoplasmic reticulum and Golgi (PubMed:20956322).</text>
</comment>
<comment type="subunit">
    <molecule>Non-structural protein 1</molecule>
    <text evidence="18 26 30">Homodimer; Homohexamer when secreted (PubMed:24505133, PubMed:24594604). NS1 interacts with NS4B (PubMed:22553322). Interacts with host complement protein CFH; this interaction leads to the degradation of C3 (PubMed:17132743).</text>
</comment>
<comment type="subunit">
    <molecule>Serine protease subunit NS2B</molecule>
    <text evidence="6 36">Forms a heterodimer with serine protease NS3. May form homooligomers (By similarity). Interacts with human SPCS1 (PubMed:29593046).</text>
</comment>
<comment type="subunit">
    <molecule>Serine protease/Helicase NS3</molecule>
    <text evidence="6">Forms a heterodimer with NS2B (By similarity). Interacts with NS4B (By similarity). Interacts with unphosphorylated RNA-directed RNA polymerase NS5; this interaction stimulates RNA-directed RNA polymerase NS5 guanylyltransferase activity (By similarity).</text>
</comment>
<comment type="subunit">
    <molecule>Non-structural protein 4A</molecule>
    <text evidence="35">Interacts with host RTN3; this interaction is important to remodel host cell membranes (PubMed:29117567).</text>
</comment>
<comment type="subunit">
    <molecule>Non-structural protein 4B</molecule>
    <text evidence="6 26">Interacts with Serine protease/Helicase NS3 (By similarity). Interacts with NS1 (PubMed:22553322).</text>
</comment>
<comment type="subunit">
    <molecule>RNA-directed RNA polymerase NS5</molecule>
    <text evidence="6">Homodimer (By similarity). Interacts with host STAT2; this interaction inhibits the phosphorylation of the latter, and, when all viral proteins are present (polyprotein), targets STAT2 for degradation (By similarity).</text>
</comment>
<comment type="subcellular location">
    <molecule>Capsid protein C</molecule>
    <subcellularLocation>
        <location evidence="6">Virion</location>
    </subcellularLocation>
    <subcellularLocation>
        <location evidence="27">Host nucleus</location>
    </subcellularLocation>
    <subcellularLocation>
        <location evidence="2">Host cytoplasm</location>
    </subcellularLocation>
    <subcellularLocation>
        <location evidence="2">Host cytoplasm</location>
        <location evidence="2">Host perinuclear region</location>
    </subcellularLocation>
</comment>
<comment type="subcellular location">
    <molecule>Peptide pr</molecule>
    <subcellularLocation>
        <location evidence="6">Secreted</location>
    </subcellularLocation>
</comment>
<comment type="subcellular location">
    <molecule>Small envelope protein M</molecule>
    <subcellularLocation>
        <location evidence="1">Virion membrane</location>
        <topology evidence="1">Multi-pass membrane protein</topology>
    </subcellularLocation>
    <subcellularLocation>
        <location evidence="1">Host endoplasmic reticulum membrane</location>
        <topology evidence="9">Multi-pass membrane protein</topology>
    </subcellularLocation>
    <text evidence="1">ER membrane retention is mediated by the transmembrane domains.</text>
</comment>
<comment type="subcellular location">
    <molecule>Envelope protein E</molecule>
    <subcellularLocation>
        <location evidence="38">Virion membrane</location>
        <topology evidence="1">Multi-pass membrane protein</topology>
    </subcellularLocation>
    <subcellularLocation>
        <location evidence="1">Host endoplasmic reticulum membrane</location>
        <topology evidence="9">Multi-pass membrane protein</topology>
    </subcellularLocation>
    <text evidence="1">ER membrane retention is mediated by the transmembrane domains.</text>
</comment>
<comment type="subcellular location">
    <molecule>Non-structural protein 1</molecule>
    <subcellularLocation>
        <location evidence="33">Secreted</location>
    </subcellularLocation>
    <subcellularLocation>
        <location evidence="29">Host endoplasmic reticulum membrane</location>
        <topology>Peripheral membrane protein</topology>
        <orientation evidence="6">Lumenal side</orientation>
    </subcellularLocation>
    <text evidence="29">Located in RE-derived vesicles hosting the replication complex.</text>
</comment>
<comment type="subcellular location">
    <molecule>Non-structural protein 2A</molecule>
    <subcellularLocation>
        <location evidence="3">Host endoplasmic reticulum membrane</location>
        <topology evidence="6">Multi-pass membrane protein</topology>
    </subcellularLocation>
</comment>
<comment type="subcellular location">
    <molecule>Serine protease subunit NS2B</molecule>
    <subcellularLocation>
        <location>Host endoplasmic reticulum membrane</location>
        <topology evidence="6">Multi-pass membrane protein</topology>
    </subcellularLocation>
</comment>
<comment type="subcellular location">
    <molecule>Serine protease/Helicase NS3</molecule>
    <subcellularLocation>
        <location evidence="14">Host endoplasmic reticulum membrane</location>
        <topology evidence="14">Peripheral membrane protein</topology>
        <orientation evidence="14">Cytoplasmic side</orientation>
    </subcellularLocation>
    <text evidence="14">Remains non-covalently associated to serine protease subunit NS2B.</text>
</comment>
<comment type="subcellular location">
    <molecule>Non-structural protein 4A</molecule>
    <subcellularLocation>
        <location evidence="29">Host endoplasmic reticulum membrane</location>
        <topology evidence="6">Multi-pass membrane protein</topology>
    </subcellularLocation>
    <text evidence="29 35">Located in RE-derived vesicles hosting the replication complex.</text>
</comment>
<comment type="subcellular location">
    <molecule>Non-structural protein 4B</molecule>
    <subcellularLocation>
        <location evidence="29">Host endoplasmic reticulum membrane</location>
        <topology evidence="6">Multi-pass membrane protein</topology>
    </subcellularLocation>
    <text evidence="29">Located in RE-derived vesicles hosting the replication complex.</text>
</comment>
<comment type="subcellular location">
    <molecule>RNA-directed RNA polymerase NS5</molecule>
    <subcellularLocation>
        <location>Host endoplasmic reticulum membrane</location>
        <topology>Peripheral membrane protein</topology>
        <orientation>Cytoplasmic side</orientation>
    </subcellularLocation>
    <subcellularLocation>
        <location evidence="2">Host nucleus</location>
    </subcellularLocation>
    <subcellularLocation>
        <location evidence="3">Host cytoplasm</location>
    </subcellularLocation>
    <text evidence="3 6">Located in RE-associated vesicles hosting the replication complex. NS5 protein is mainly localized in the nucleus rather than in ER vesicles (By similarity). Shuttles between the cytoplasm and nucleus (By similarity).</text>
</comment>
<comment type="domain">
    <molecule>Small envelope protein M</molecule>
    <text evidence="6">The transmembrane domains contain an endoplasmic reticulum retention signal.</text>
</comment>
<comment type="domain">
    <molecule>Envelope protein E</molecule>
    <text evidence="6">The transmembrane domains contain an endoplasmic reticulum retention signal.</text>
</comment>
<comment type="domain">
    <molecule>RNA-directed RNA polymerase NS5</molecule>
    <text evidence="2">Contains a PDZ-binding motif that binds to several PDZ-containing cellular proteins. These interactions seem necessary for an optimal viral replication.</text>
</comment>
<comment type="PTM">
    <molecule>Genome polyprotein</molecule>
    <text evidence="6">Specific enzymatic cleavages in vivo yield mature proteins. Cleavages in the lumen of endoplasmic reticulum are performed by host signal peptidase, whereas cleavages in the cytoplasmic side are performed by serine protease NS3. Signal cleavage at the 2K-4B site requires a prior NS3 protease-mediated cleavage at the 4A-2K site.</text>
</comment>
<comment type="PTM">
    <molecule>Protein prM</molecule>
    <text evidence="6">Cleaved in post-Golgi vesicles by a host furin, releasing the mature small envelope protein M, and peptide pr. This cleavage is incomplete as up to 30% of viral particles still carry uncleaved prM.</text>
</comment>
<comment type="PTM">
    <molecule>Envelope protein E</molecule>
    <text evidence="6">N-glycosylated.</text>
</comment>
<comment type="PTM">
    <molecule>Non-structural protein 1</molecule>
    <text evidence="6 30">N-glycosylated (PubMed:24505133). The excreted form is glycosylated and this is required for efficient secretion of the protein from infected cells (By similarity).</text>
</comment>
<comment type="PTM">
    <molecule>Serine protease/Helicase NS3</molecule>
    <text evidence="8">Acetylated by host KAT5. Acetylation modulates NS3 RNA-binding and unwinding activities and plays an important positive role for viral replication.</text>
</comment>
<comment type="PTM">
    <molecule>RNA-directed RNA polymerase NS5</molecule>
    <text evidence="6">Phosphorylated on serines residues. This phosphorylation may trigger NS5 nuclear localization.</text>
</comment>
<comment type="similarity">
    <text evidence="15">In the N-terminal section; belongs to the class I-like SAM-binding methyltransferase superfamily. mRNA cap 0-1 NS5-type methyltransferase family.</text>
</comment>
<dbReference type="EC" id="3.4.21.91"/>
<dbReference type="EC" id="3.6.1.15" evidence="20"/>
<dbReference type="EC" id="3.6.4.13" evidence="20"/>
<dbReference type="EC" id="2.1.1.56" evidence="15 22 24"/>
<dbReference type="EC" id="2.1.1.57" evidence="15 22 24"/>
<dbReference type="EC" id="2.7.7.48" evidence="10"/>
<dbReference type="EMBL" id="AF196835">
    <property type="protein sequence ID" value="AAF20092.2"/>
    <property type="molecule type" value="Genomic_RNA"/>
</dbReference>
<dbReference type="EMBL" id="AF404755">
    <property type="protein sequence ID" value="AAM81751.1"/>
    <property type="molecule type" value="Genomic_RNA"/>
</dbReference>
<dbReference type="EMBL" id="HM488125">
    <property type="protein sequence ID" value="ADL27936.1"/>
    <property type="molecule type" value="Genomic_RNA"/>
</dbReference>
<dbReference type="EMBL" id="HM488126">
    <property type="protein sequence ID" value="ADL27937.1"/>
    <property type="molecule type" value="Genomic_RNA"/>
</dbReference>
<dbReference type="EMBL" id="HM488127">
    <property type="protein sequence ID" value="ADL27938.1"/>
    <property type="molecule type" value="Genomic_RNA"/>
</dbReference>
<dbReference type="EMBL" id="HM488128">
    <property type="protein sequence ID" value="ADL27939.1"/>
    <property type="molecule type" value="Genomic_RNA"/>
</dbReference>
<dbReference type="EMBL" id="KC407666">
    <property type="protein sequence ID" value="AGI15883.1"/>
    <property type="molecule type" value="Genomic_RNA"/>
</dbReference>
<dbReference type="EMBL" id="KM083619">
    <property type="protein sequence ID" value="AIO10814.1"/>
    <property type="molecule type" value="Genomic_RNA"/>
</dbReference>
<dbReference type="EMBL" id="KX547386">
    <property type="protein sequence ID" value="ANW69091.1"/>
    <property type="molecule type" value="Genomic_RNA"/>
</dbReference>
<dbReference type="EMBL" id="KX547393">
    <property type="protein sequence ID" value="ANW69112.1"/>
    <property type="molecule type" value="Genomic_RNA"/>
</dbReference>
<dbReference type="EMBL" id="AB185914">
    <property type="protein sequence ID" value="BAD34488.1"/>
    <property type="molecule type" value="Genomic_RNA"/>
</dbReference>
<dbReference type="PDB" id="2OY0">
    <property type="method" value="X-ray"/>
    <property type="resolution" value="2.80 A"/>
    <property type="chains" value="A/B=2534-2795"/>
</dbReference>
<dbReference type="PDB" id="3I50">
    <property type="method" value="X-ray"/>
    <property type="resolution" value="3.00 A"/>
    <property type="chains" value="E=291-692"/>
</dbReference>
<dbReference type="PDB" id="3IYW">
    <property type="method" value="EM"/>
    <property type="resolution" value="13.70 A"/>
    <property type="chains" value="A/B/C=291-690"/>
</dbReference>
<dbReference type="PDB" id="3J0B">
    <property type="method" value="EM"/>
    <property type="resolution" value="10.30 A"/>
    <property type="chains" value="A/B/C=291-690"/>
</dbReference>
<dbReference type="PDB" id="3LKZ">
    <property type="method" value="X-ray"/>
    <property type="resolution" value="2.00 A"/>
    <property type="chains" value="A/B=2529-2828"/>
</dbReference>
<dbReference type="PDB" id="4O6C">
    <property type="method" value="X-ray"/>
    <property type="resolution" value="2.75 A"/>
    <property type="chains" value="A/B/C/D/E/F=791-1143"/>
</dbReference>
<dbReference type="PDB" id="4O6D">
    <property type="method" value="X-ray"/>
    <property type="resolution" value="2.59 A"/>
    <property type="chains" value="A/B=791-1143"/>
</dbReference>
<dbReference type="PDB" id="4OIE">
    <property type="method" value="X-ray"/>
    <property type="resolution" value="1.85 A"/>
    <property type="chains" value="A=963-1143"/>
</dbReference>
<dbReference type="PDB" id="4OII">
    <property type="method" value="X-ray"/>
    <property type="resolution" value="3.00 A"/>
    <property type="chains" value="A/B=963-1143"/>
</dbReference>
<dbReference type="PDB" id="6UTE">
    <property type="method" value="X-ray"/>
    <property type="resolution" value="2.90 A"/>
    <property type="chains" value="S=593-690"/>
</dbReference>
<dbReference type="PDB" id="7E4K">
    <property type="method" value="X-ray"/>
    <property type="resolution" value="2.69 A"/>
    <property type="chains" value="A=291-693"/>
</dbReference>
<dbReference type="PDB" id="8CO8">
    <property type="method" value="X-ray"/>
    <property type="resolution" value="1.91 A"/>
    <property type="chains" value="A=1423-1470, A=1506-1692"/>
</dbReference>
<dbReference type="PDBsum" id="2OY0"/>
<dbReference type="PDBsum" id="3I50"/>
<dbReference type="PDBsum" id="3IYW"/>
<dbReference type="PDBsum" id="3J0B"/>
<dbReference type="PDBsum" id="3LKZ"/>
<dbReference type="PDBsum" id="4O6C"/>
<dbReference type="PDBsum" id="4O6D"/>
<dbReference type="PDBsum" id="4OIE"/>
<dbReference type="PDBsum" id="4OII"/>
<dbReference type="PDBsum" id="6UTE"/>
<dbReference type="PDBsum" id="7E4K"/>
<dbReference type="PDBsum" id="8CO8"/>
<dbReference type="SMR" id="Q9Q6P4"/>
<dbReference type="MEROPS" id="S07.003"/>
<dbReference type="GlyCosmos" id="Q9Q6P4">
    <property type="glycosylation" value="5 sites, No reported glycans"/>
</dbReference>
<dbReference type="iPTMnet" id="Q9Q6P4"/>
<dbReference type="ABCD" id="Q9Q6P4">
    <property type="antibodies" value="16 sequenced antibodies"/>
</dbReference>
<dbReference type="EvolutionaryTrace" id="Q9Q6P4"/>
<dbReference type="Proteomes" id="UP000096925">
    <property type="component" value="Genome"/>
</dbReference>
<dbReference type="Proteomes" id="UP000107647">
    <property type="component" value="Genome"/>
</dbReference>
<dbReference type="Proteomes" id="UP000123900">
    <property type="component" value="Genome"/>
</dbReference>
<dbReference type="Proteomes" id="UP000138291">
    <property type="component" value="Genome"/>
</dbReference>
<dbReference type="Proteomes" id="UP000139973">
    <property type="component" value="Genome"/>
</dbReference>
<dbReference type="Proteomes" id="UP000146770">
    <property type="component" value="Genome"/>
</dbReference>
<dbReference type="Proteomes" id="UP000163596">
    <property type="component" value="Genome"/>
</dbReference>
<dbReference type="Proteomes" id="UP000169485">
    <property type="component" value="Genome"/>
</dbReference>
<dbReference type="Proteomes" id="UP000180632">
    <property type="component" value="Genome"/>
</dbReference>
<dbReference type="GO" id="GO:0005576">
    <property type="term" value="C:extracellular region"/>
    <property type="evidence" value="ECO:0007669"/>
    <property type="project" value="UniProtKB-SubCell"/>
</dbReference>
<dbReference type="GO" id="GO:0044167">
    <property type="term" value="C:host cell endoplasmic reticulum membrane"/>
    <property type="evidence" value="ECO:0007669"/>
    <property type="project" value="UniProtKB-SubCell"/>
</dbReference>
<dbReference type="GO" id="GO:0042025">
    <property type="term" value="C:host cell nucleus"/>
    <property type="evidence" value="ECO:0007669"/>
    <property type="project" value="UniProtKB-SubCell"/>
</dbReference>
<dbReference type="GO" id="GO:0044220">
    <property type="term" value="C:host cell perinuclear region of cytoplasm"/>
    <property type="evidence" value="ECO:0007669"/>
    <property type="project" value="UniProtKB-SubCell"/>
</dbReference>
<dbReference type="GO" id="GO:0016020">
    <property type="term" value="C:membrane"/>
    <property type="evidence" value="ECO:0007669"/>
    <property type="project" value="UniProtKB-KW"/>
</dbReference>
<dbReference type="GO" id="GO:0019028">
    <property type="term" value="C:viral capsid"/>
    <property type="evidence" value="ECO:0007669"/>
    <property type="project" value="UniProtKB-KW"/>
</dbReference>
<dbReference type="GO" id="GO:0055036">
    <property type="term" value="C:virion membrane"/>
    <property type="evidence" value="ECO:0007669"/>
    <property type="project" value="UniProtKB-SubCell"/>
</dbReference>
<dbReference type="GO" id="GO:0005524">
    <property type="term" value="F:ATP binding"/>
    <property type="evidence" value="ECO:0007669"/>
    <property type="project" value="UniProtKB-KW"/>
</dbReference>
<dbReference type="GO" id="GO:0016887">
    <property type="term" value="F:ATP hydrolysis activity"/>
    <property type="evidence" value="ECO:0007669"/>
    <property type="project" value="RHEA"/>
</dbReference>
<dbReference type="GO" id="GO:0003725">
    <property type="term" value="F:double-stranded RNA binding"/>
    <property type="evidence" value="ECO:0007669"/>
    <property type="project" value="InterPro"/>
</dbReference>
<dbReference type="GO" id="GO:0046872">
    <property type="term" value="F:metal ion binding"/>
    <property type="evidence" value="ECO:0007669"/>
    <property type="project" value="UniProtKB-KW"/>
</dbReference>
<dbReference type="GO" id="GO:0004483">
    <property type="term" value="F:mRNA (nucleoside-2'-O-)-methyltransferase activity"/>
    <property type="evidence" value="ECO:0000314"/>
    <property type="project" value="UniProtKB"/>
</dbReference>
<dbReference type="GO" id="GO:0004482">
    <property type="term" value="F:mRNA 5'-cap (guanine-N7-)-methyltransferase activity"/>
    <property type="evidence" value="ECO:0007669"/>
    <property type="project" value="UniProtKB-EC"/>
</dbReference>
<dbReference type="GO" id="GO:0046983">
    <property type="term" value="F:protein dimerization activity"/>
    <property type="evidence" value="ECO:0007669"/>
    <property type="project" value="InterPro"/>
</dbReference>
<dbReference type="GO" id="GO:0003724">
    <property type="term" value="F:RNA helicase activity"/>
    <property type="evidence" value="ECO:0007669"/>
    <property type="project" value="UniProtKB-EC"/>
</dbReference>
<dbReference type="GO" id="GO:0003968">
    <property type="term" value="F:RNA-directed RNA polymerase activity"/>
    <property type="evidence" value="ECO:0007669"/>
    <property type="project" value="UniProtKB-KW"/>
</dbReference>
<dbReference type="GO" id="GO:0004252">
    <property type="term" value="F:serine-type endopeptidase activity"/>
    <property type="evidence" value="ECO:0007669"/>
    <property type="project" value="InterPro"/>
</dbReference>
<dbReference type="GO" id="GO:0005198">
    <property type="term" value="F:structural molecule activity"/>
    <property type="evidence" value="ECO:0007669"/>
    <property type="project" value="InterPro"/>
</dbReference>
<dbReference type="GO" id="GO:0039654">
    <property type="term" value="P:fusion of virus membrane with host endosome membrane"/>
    <property type="evidence" value="ECO:0007669"/>
    <property type="project" value="UniProtKB-KW"/>
</dbReference>
<dbReference type="GO" id="GO:0006508">
    <property type="term" value="P:proteolysis"/>
    <property type="evidence" value="ECO:0007669"/>
    <property type="project" value="UniProtKB-KW"/>
</dbReference>
<dbReference type="GO" id="GO:0046718">
    <property type="term" value="P:symbiont entry into host cell"/>
    <property type="evidence" value="ECO:0007669"/>
    <property type="project" value="UniProtKB-KW"/>
</dbReference>
<dbReference type="GO" id="GO:0039520">
    <property type="term" value="P:symbiont-mediated activation of host autophagy"/>
    <property type="evidence" value="ECO:0007669"/>
    <property type="project" value="UniProtKB-KW"/>
</dbReference>
<dbReference type="GO" id="GO:0052170">
    <property type="term" value="P:symbiont-mediated suppression of host innate immune response"/>
    <property type="evidence" value="ECO:0007669"/>
    <property type="project" value="UniProtKB-KW"/>
</dbReference>
<dbReference type="GO" id="GO:0039563">
    <property type="term" value="P:symbiont-mediated suppression of host JAK-STAT cascade via inhibition of STAT1 activity"/>
    <property type="evidence" value="ECO:0007669"/>
    <property type="project" value="UniProtKB-KW"/>
</dbReference>
<dbReference type="GO" id="GO:0039564">
    <property type="term" value="P:symbiont-mediated suppression of host JAK-STAT cascade via inhibition of STAT2 activity"/>
    <property type="evidence" value="ECO:0007669"/>
    <property type="project" value="UniProtKB-KW"/>
</dbReference>
<dbReference type="GO" id="GO:0039502">
    <property type="term" value="P:symbiont-mediated suppression of host type I interferon-mediated signaling pathway"/>
    <property type="evidence" value="ECO:0007669"/>
    <property type="project" value="UniProtKB-KW"/>
</dbReference>
<dbReference type="GO" id="GO:0039694">
    <property type="term" value="P:viral RNA genome replication"/>
    <property type="evidence" value="ECO:0007669"/>
    <property type="project" value="InterPro"/>
</dbReference>
<dbReference type="GO" id="GO:0019062">
    <property type="term" value="P:virion attachment to host cell"/>
    <property type="evidence" value="ECO:0007669"/>
    <property type="project" value="UniProtKB-KW"/>
</dbReference>
<dbReference type="CDD" id="cd20761">
    <property type="entry name" value="capping_2-OMTase_Flaviviridae"/>
    <property type="match status" value="1"/>
</dbReference>
<dbReference type="CDD" id="cd17931">
    <property type="entry name" value="DEXHc_viral_Ns3"/>
    <property type="match status" value="1"/>
</dbReference>
<dbReference type="CDD" id="cd12149">
    <property type="entry name" value="Flavi_E_C"/>
    <property type="match status" value="1"/>
</dbReference>
<dbReference type="CDD" id="cd23204">
    <property type="entry name" value="Flavivirus_RdRp"/>
    <property type="match status" value="1"/>
</dbReference>
<dbReference type="CDD" id="cd18806">
    <property type="entry name" value="SF2_C_viral"/>
    <property type="match status" value="1"/>
</dbReference>
<dbReference type="DisProt" id="DP02203"/>
<dbReference type="FunFam" id="1.20.1280.260:FF:000001">
    <property type="entry name" value="Envelope glycoprotein"/>
    <property type="match status" value="1"/>
</dbReference>
<dbReference type="FunFam" id="2.60.40.350:FF:000001">
    <property type="entry name" value="Envelope glycoprotein"/>
    <property type="match status" value="1"/>
</dbReference>
<dbReference type="FunFam" id="1.10.10.930:FF:000002">
    <property type="entry name" value="Genome polyprotein"/>
    <property type="match status" value="1"/>
</dbReference>
<dbReference type="FunFam" id="1.10.260.90:FF:000001">
    <property type="entry name" value="Genome polyprotein"/>
    <property type="match status" value="1"/>
</dbReference>
<dbReference type="FunFam" id="1.10.8.970:FF:000003">
    <property type="entry name" value="Genome polyprotein"/>
    <property type="match status" value="1"/>
</dbReference>
<dbReference type="FunFam" id="2.40.10.120:FF:000005">
    <property type="entry name" value="Genome polyprotein"/>
    <property type="match status" value="1"/>
</dbReference>
<dbReference type="FunFam" id="2.40.10.120:FF:000006">
    <property type="entry name" value="Genome polyprotein"/>
    <property type="match status" value="1"/>
</dbReference>
<dbReference type="FunFam" id="2.60.260.50:FF:000001">
    <property type="entry name" value="Genome polyprotein"/>
    <property type="match status" value="1"/>
</dbReference>
<dbReference type="FunFam" id="3.30.70.2840:FF:000001">
    <property type="entry name" value="Genome polyprotein"/>
    <property type="match status" value="1"/>
</dbReference>
<dbReference type="FunFam" id="3.30.70.2840:FF:000002">
    <property type="entry name" value="Genome polyprotein"/>
    <property type="match status" value="1"/>
</dbReference>
<dbReference type="FunFam" id="3.40.50.150:FF:000105">
    <property type="entry name" value="Genome polyprotein"/>
    <property type="match status" value="1"/>
</dbReference>
<dbReference type="FunFam" id="3.40.50.300:FF:000763">
    <property type="entry name" value="Genome polyprotein"/>
    <property type="match status" value="1"/>
</dbReference>
<dbReference type="Gene3D" id="1.10.10.930">
    <property type="match status" value="1"/>
</dbReference>
<dbReference type="Gene3D" id="1.10.260.90">
    <property type="match status" value="1"/>
</dbReference>
<dbReference type="Gene3D" id="1.20.1280.260">
    <property type="match status" value="1"/>
</dbReference>
<dbReference type="Gene3D" id="2.40.10.120">
    <property type="match status" value="2"/>
</dbReference>
<dbReference type="Gene3D" id="2.60.40.350">
    <property type="match status" value="1"/>
</dbReference>
<dbReference type="Gene3D" id="1.10.8.970">
    <property type="entry name" value="Flavivirus envelope glycoprotein M-like"/>
    <property type="match status" value="1"/>
</dbReference>
<dbReference type="Gene3D" id="2.60.260.50">
    <property type="entry name" value="Flavivirus polyprotein propeptide domain"/>
    <property type="match status" value="1"/>
</dbReference>
<dbReference type="Gene3D" id="3.30.70.2840">
    <property type="entry name" value="Flavivirus RNA-directed RNA polymerase, thumb domain"/>
    <property type="match status" value="3"/>
</dbReference>
<dbReference type="Gene3D" id="3.40.50.300">
    <property type="entry name" value="P-loop containing nucleotide triphosphate hydrolases"/>
    <property type="match status" value="2"/>
</dbReference>
<dbReference type="Gene3D" id="2.60.98.10">
    <property type="entry name" value="Tick-borne Encephalitis virus Glycoprotein, domain 1"/>
    <property type="match status" value="1"/>
</dbReference>
<dbReference type="Gene3D" id="3.40.50.150">
    <property type="entry name" value="Vaccinia Virus protein VP39"/>
    <property type="match status" value="1"/>
</dbReference>
<dbReference type="Gene3D" id="3.30.67.10">
    <property type="entry name" value="Viral Envelope Glycoprotein, domain 2"/>
    <property type="match status" value="1"/>
</dbReference>
<dbReference type="Gene3D" id="3.30.387.10">
    <property type="entry name" value="Viral Envelope Glycoprotein, domain 3"/>
    <property type="match status" value="1"/>
</dbReference>
<dbReference type="InterPro" id="IPR043502">
    <property type="entry name" value="DNA/RNA_pol_sf"/>
</dbReference>
<dbReference type="InterPro" id="IPR000069">
    <property type="entry name" value="Env_glycoprot_M_flavivir"/>
</dbReference>
<dbReference type="InterPro" id="IPR038302">
    <property type="entry name" value="Env_glycoprot_M_sf_flavivir"/>
</dbReference>
<dbReference type="InterPro" id="IPR013755">
    <property type="entry name" value="Flav_gly_cen_dom_subdom1"/>
</dbReference>
<dbReference type="InterPro" id="IPR001122">
    <property type="entry name" value="Flavi_capsidC"/>
</dbReference>
<dbReference type="InterPro" id="IPR037172">
    <property type="entry name" value="Flavi_capsidC_sf"/>
</dbReference>
<dbReference type="InterPro" id="IPR011492">
    <property type="entry name" value="Flavi_DEAD"/>
</dbReference>
<dbReference type="InterPro" id="IPR027287">
    <property type="entry name" value="Flavi_E_Ig-like"/>
</dbReference>
<dbReference type="InterPro" id="IPR026470">
    <property type="entry name" value="Flavi_E_Stem/Anchor_dom"/>
</dbReference>
<dbReference type="InterPro" id="IPR038345">
    <property type="entry name" value="Flavi_E_Stem/Anchor_dom_sf"/>
</dbReference>
<dbReference type="InterPro" id="IPR011998">
    <property type="entry name" value="Flavi_Glycoprot_E_cen/dimer"/>
</dbReference>
<dbReference type="InterPro" id="IPR001157">
    <property type="entry name" value="Flavi_NS1"/>
</dbReference>
<dbReference type="InterPro" id="IPR000752">
    <property type="entry name" value="Flavi_NS2A"/>
</dbReference>
<dbReference type="InterPro" id="IPR000487">
    <property type="entry name" value="Flavi_NS2B"/>
</dbReference>
<dbReference type="InterPro" id="IPR001850">
    <property type="entry name" value="Flavi_NS3_S7"/>
</dbReference>
<dbReference type="InterPro" id="IPR000404">
    <property type="entry name" value="Flavi_NS4A"/>
</dbReference>
<dbReference type="InterPro" id="IPR001528">
    <property type="entry name" value="Flavi_NS4B"/>
</dbReference>
<dbReference type="InterPro" id="IPR046811">
    <property type="entry name" value="Flavi_NS5_thumb"/>
</dbReference>
<dbReference type="InterPro" id="IPR002535">
    <property type="entry name" value="Flavi_propep"/>
</dbReference>
<dbReference type="InterPro" id="IPR038688">
    <property type="entry name" value="Flavi_propep_sf"/>
</dbReference>
<dbReference type="InterPro" id="IPR047530">
    <property type="entry name" value="Flavi_RdRp"/>
</dbReference>
<dbReference type="InterPro" id="IPR000208">
    <property type="entry name" value="Flavi_RdRp_fingers/palm"/>
</dbReference>
<dbReference type="InterPro" id="IPR000336">
    <property type="entry name" value="Flavivir/Alphavir_Ig-like_sf"/>
</dbReference>
<dbReference type="InterPro" id="IPR014412">
    <property type="entry name" value="Gen_Poly_FLV"/>
</dbReference>
<dbReference type="InterPro" id="IPR036253">
    <property type="entry name" value="Glycoprot_cen/dimer_sf"/>
</dbReference>
<dbReference type="InterPro" id="IPR038055">
    <property type="entry name" value="Glycoprot_E_dimer_dom"/>
</dbReference>
<dbReference type="InterPro" id="IPR013756">
    <property type="entry name" value="GlyE_cen_dom_subdom2"/>
</dbReference>
<dbReference type="InterPro" id="IPR014001">
    <property type="entry name" value="Helicase_ATP-bd"/>
</dbReference>
<dbReference type="InterPro" id="IPR001650">
    <property type="entry name" value="Helicase_C-like"/>
</dbReference>
<dbReference type="InterPro" id="IPR014756">
    <property type="entry name" value="Ig_E-set"/>
</dbReference>
<dbReference type="InterPro" id="IPR026490">
    <property type="entry name" value="mRNA_cap_0/1_MeTrfase"/>
</dbReference>
<dbReference type="InterPro" id="IPR049486">
    <property type="entry name" value="NS3-hel_C_flaviviridae"/>
</dbReference>
<dbReference type="InterPro" id="IPR027417">
    <property type="entry name" value="P-loop_NTPase"/>
</dbReference>
<dbReference type="InterPro" id="IPR009003">
    <property type="entry name" value="Peptidase_S1_PA"/>
</dbReference>
<dbReference type="InterPro" id="IPR007094">
    <property type="entry name" value="RNA-dir_pol_PSvirus"/>
</dbReference>
<dbReference type="InterPro" id="IPR002877">
    <property type="entry name" value="RNA_MeTrfase_FtsJ_dom"/>
</dbReference>
<dbReference type="InterPro" id="IPR029063">
    <property type="entry name" value="SAM-dependent_MTases_sf"/>
</dbReference>
<dbReference type="NCBIfam" id="TIGR04240">
    <property type="entry name" value="flavi_E_stem"/>
    <property type="match status" value="1"/>
</dbReference>
<dbReference type="Pfam" id="PF20907">
    <property type="entry name" value="Flav_NS3-hel_C"/>
    <property type="match status" value="1"/>
</dbReference>
<dbReference type="Pfam" id="PF01003">
    <property type="entry name" value="Flavi_capsid"/>
    <property type="match status" value="1"/>
</dbReference>
<dbReference type="Pfam" id="PF07652">
    <property type="entry name" value="Flavi_DEAD"/>
    <property type="match status" value="1"/>
</dbReference>
<dbReference type="Pfam" id="PF21659">
    <property type="entry name" value="Flavi_E_stem"/>
    <property type="match status" value="1"/>
</dbReference>
<dbReference type="Pfam" id="PF02832">
    <property type="entry name" value="Flavi_glycop_C"/>
    <property type="match status" value="1"/>
</dbReference>
<dbReference type="Pfam" id="PF00869">
    <property type="entry name" value="Flavi_glycoprot"/>
    <property type="match status" value="1"/>
</dbReference>
<dbReference type="Pfam" id="PF01004">
    <property type="entry name" value="Flavi_M"/>
    <property type="match status" value="1"/>
</dbReference>
<dbReference type="Pfam" id="PF00948">
    <property type="entry name" value="Flavi_NS1"/>
    <property type="match status" value="1"/>
</dbReference>
<dbReference type="Pfam" id="PF01005">
    <property type="entry name" value="Flavi_NS2A"/>
    <property type="match status" value="1"/>
</dbReference>
<dbReference type="Pfam" id="PF01002">
    <property type="entry name" value="Flavi_NS2B"/>
    <property type="match status" value="1"/>
</dbReference>
<dbReference type="Pfam" id="PF01350">
    <property type="entry name" value="Flavi_NS4A"/>
    <property type="match status" value="1"/>
</dbReference>
<dbReference type="Pfam" id="PF01349">
    <property type="entry name" value="Flavi_NS4B"/>
    <property type="match status" value="1"/>
</dbReference>
<dbReference type="Pfam" id="PF00972">
    <property type="entry name" value="Flavi_NS5"/>
    <property type="match status" value="1"/>
</dbReference>
<dbReference type="Pfam" id="PF20483">
    <property type="entry name" value="Flavi_NS5_thumb"/>
    <property type="match status" value="1"/>
</dbReference>
<dbReference type="Pfam" id="PF01570">
    <property type="entry name" value="Flavi_propep"/>
    <property type="match status" value="1"/>
</dbReference>
<dbReference type="Pfam" id="PF01728">
    <property type="entry name" value="FtsJ"/>
    <property type="match status" value="1"/>
</dbReference>
<dbReference type="Pfam" id="PF00949">
    <property type="entry name" value="Peptidase_S7"/>
    <property type="match status" value="1"/>
</dbReference>
<dbReference type="PIRSF" id="PIRSF003817">
    <property type="entry name" value="Gen_Poly_FLV"/>
    <property type="match status" value="1"/>
</dbReference>
<dbReference type="SMART" id="SM00487">
    <property type="entry name" value="DEXDc"/>
    <property type="match status" value="1"/>
</dbReference>
<dbReference type="SMART" id="SM00490">
    <property type="entry name" value="HELICc"/>
    <property type="match status" value="1"/>
</dbReference>
<dbReference type="SUPFAM" id="SSF56672">
    <property type="entry name" value="DNA/RNA polymerases"/>
    <property type="match status" value="1"/>
</dbReference>
<dbReference type="SUPFAM" id="SSF81296">
    <property type="entry name" value="E set domains"/>
    <property type="match status" value="1"/>
</dbReference>
<dbReference type="SUPFAM" id="SSF101257">
    <property type="entry name" value="Flavivirus capsid protein C"/>
    <property type="match status" value="1"/>
</dbReference>
<dbReference type="SUPFAM" id="SSF52540">
    <property type="entry name" value="P-loop containing nucleoside triphosphate hydrolases"/>
    <property type="match status" value="2"/>
</dbReference>
<dbReference type="SUPFAM" id="SSF53335">
    <property type="entry name" value="S-adenosyl-L-methionine-dependent methyltransferases"/>
    <property type="match status" value="1"/>
</dbReference>
<dbReference type="SUPFAM" id="SSF50494">
    <property type="entry name" value="Trypsin-like serine proteases"/>
    <property type="match status" value="1"/>
</dbReference>
<dbReference type="SUPFAM" id="SSF56983">
    <property type="entry name" value="Viral glycoprotein, central and dimerisation domains"/>
    <property type="match status" value="1"/>
</dbReference>
<dbReference type="PROSITE" id="PS51527">
    <property type="entry name" value="FLAVIVIRUS_NS2B"/>
    <property type="match status" value="1"/>
</dbReference>
<dbReference type="PROSITE" id="PS51528">
    <property type="entry name" value="FLAVIVIRUS_NS3PRO"/>
    <property type="match status" value="1"/>
</dbReference>
<dbReference type="PROSITE" id="PS51192">
    <property type="entry name" value="HELICASE_ATP_BIND_1"/>
    <property type="match status" value="1"/>
</dbReference>
<dbReference type="PROSITE" id="PS51194">
    <property type="entry name" value="HELICASE_CTER"/>
    <property type="match status" value="1"/>
</dbReference>
<dbReference type="PROSITE" id="PS50507">
    <property type="entry name" value="RDRP_SSRNA_POS"/>
    <property type="match status" value="1"/>
</dbReference>
<dbReference type="PROSITE" id="PS51591">
    <property type="entry name" value="RNA_CAP01_NS5_MT"/>
    <property type="match status" value="1"/>
</dbReference>
<sequence>MSKKPGGPGKSRAVNMLKRGMPRVLSLIGLKRAMLSLIDGKGPIRFVLALLAFFRFTAIAPTRAVLDRWRGVNKQTAMKHLLSFKKELGTLTSAINRRSSKQKKRGGKTGIAVMIGLIASVGAVTLSNFQGKVMMTVNATDVTDVITIPTAAGKNLCIVRAMDVGYMCDDTITYECPVLSAGNDPEDIDCWCTKSAVYVRYGRCTKTRHSRRSRRSLTVQTHGESTLANKKGAWMDSTKATRYLVKTESWILRNPGYALVAAVIGWMLGSNTMQRVVFVVLLLLVAPAYSFNCLGMSNRDFLEGVSGATWVDLVLEGDSCVTIMSKDKPTIDVKMMNMEAANLAEVRSYCYLATVSDLSTKAACPTMGEAHNDKRADPAFVCRQGVVDRGWGNGCGLFGKGSIDTCAKFACSTKAIGRTILKENIKYEVAIFVHGPTTVESHGNYSTQVGATQAGRFSITPAAPSYTLKLGEYGEVTVDCEPRSGIDTNAYYVMTVGTKTFLVHREWFMDLNLPWSSAGSTVWRNRETLMEFEEPHATKQSVIALGSQEGALHQALAGAIPVEFSSNTVKLTSGHLKCRVKMEKLQLKGTTYGVCSKAFKFLGTPADTGHGTVVLELQYTGTDGPCKVPISSVASLNDLTPVGRLVTVNPFVSVATANAKVLIELEPPFGDSYIVVGRGEQQINHHWHKSGSSIGKAFTTTLKGAQRLAALGDTAWDFGSVGGVFTSVGKAVHQVFGGAFRSLFGGMSWITQGLLGALLLWMGINARDRSIALTFLAVGGVLLFLSVNVHADTGCAIDISRQELRCGSGVFIHNDVEAWMDRYKYYPETPQGLAKIIQKAHKEGVCGLRSVSRLEHQMWEAVKDELNTLLKENGVDLSVVVEKQEGMYKSAPKRLTATTEKLEIGWKAWGKSILFAPELANNTFVVDGPETKECPTQNRAWNSLEVEDFGFGLTSTRMFLKVRESNTTECDSKIIGTAVKNNLAIHSDLSYWIESRLNDTWKLERAVLGEVKSCTWPETHTLWGDGILESDLIIPVTLAGPRSNHNRRPGYKTQNQGPWDEGRVEIDFDYCPGTTVTLSESCGHRGPATRTTTESGKLITDWCCRSCTLPPLRYQTDSGCWYGMEIRPQRHDEKTLVQSQVNAYNADMIDPFQLGLLVVFLATQEVLRKRWTAKISMPAILIALLVLVFGGITYTDVLRYVILVGAAFAESNSGGDVVHLALMATFKIQPVFMVASFLKARWTNQENILLMLAAVFFQMAYHDARQILLWEIPDVLNSLAVAWMILRAITFTTTSNVVVPLLALLTPGLRCLNLDVYRILLLMVGIGSLIREKRSAAAKKKGASLLCLALASTGLFNPMILAAGLIACDPNRKRGWPATEVMTAVGLMFAIVGGLAELDIDSMAIPMTIAGLMFAAFVISGKSTDMWIERTADISWESDAEITGSSERVDVRLDDDGNFQLMNDPGAPWKIWMLRMVCLAISAYTPWAILPSVVGFWITLQYTKRGGVLWDTPSPKEYKKGDTTTGVYRIMTRGLLGSYQAGAGVMVEGVFHTLWHTTKGAALMSGEGRLDPYWGSVKEDRLCYGGPWKLQHKWNGQDEVQMIVVEPGKNVKNVQTKPGVFKTPEGEIGAVTLDFPTGTSGSPIVDKNGDVIGLYGNGVIMPNGSYISAIVQGERMDEPIPAGFEPEMLRKKQITVLDLHPGAGKTRRILPQIIKEAINRRLRTAVLAPTRVVAAEMAEALRGLPIRYQTSAVPREHNGNEIVDVMCHATLTHRLMSPHRVPNYNLFVMDEAHFTDPASIAARGYISTKVELGEAAAIFMTATPPGTSDPFPESNSPISDLQTEIPDRAWNSGYEWITEYTGKTVWFVPSVKMGNEIALCLQRAGKKVVQLNRKSYETEYPKCKNDDWDFVITTDISEMGANFKASRVIDSRKSVKPTIITEGEGRVILGEPSAVTAASAAQRRGRIGRNPSQVGDEYCYGGHTNEDDSNFAHWTEARIMLDNINMPNGLIAQFYQPEREKVYTMDGEYRLRGEERKNFLELLRTADLPVWLAYKVAAAGVSYHDRRWCFDGPRTNTILEDNNEVEVITKLGERKILRPRWIDARVYSDHQALKAFKDFASGKRSQIGLIEVLGKMPEHFMGKTWEALDTMYVVATAEKGGRAHRMALEELPDALQTIALIALLSVMTMGVFFLLMQRKGIGKIGLGGAVLGVATFFCWMAEVPGTKIAGMLLLSLLLMIVLIPEPEKQRSQTDNQLAVFLICVMTLVSAVAANEMGWLDKTKSDISSLFGQRIEVKENFSMGEFLLDLRPATAWSLYAVTTAVLTPLLKHLITSDYINTSLTSINVQASALFTLARGFPFVDVGVSALLLAAGCWGQVTLTVTVTAATLLFCHYAYMVPGWQAEAMRSAQRRTAAGIMKNAVVDGIVATDVPELERTTPIMQKKVGQIMLILVSLAAVVVNPSVKTVREAGILITAAAVTLWENGASSVWNATTAIGLCHIMRGGWLSCLSITWTLIKNMEKPGLKRGGAKGRTLGEVWKERLNQMTKEEFTRYRKEAIIEVDRSAAKHARKEGNVTGGHPVSRGTAKLRWLVERRFLEPVGKVIDLGCGRGGWCYYMATQKRVQEVRGYTKGGPGHEEPQLVQSYGWNIVTMKSGVDVFYRPSECCDTLLCDIGESSSSAEVEEHRTIRVLEMVEDWLHRGPREFCVKVLCPYMPKVIEKMELLQRRYGGGLVRNPLSRNSTHEMYWVSRASGNVVHSVNMTSQVLLGRMEKRTWKGPQYEEDVNLGSGTRAVGKPLLNSDTSKIKNRIERLRREYSSTWHHDENHPYRTWNYHGSYDVKPTGSASSLVNGVVRLLSKPWDTITNVTTMAMTDTTPFGQQRVFKEKVDTKAPEPPEGVKYVLNETTNWLWAFLAREKRPRMCSREEFIRKVNSNAALGAMFEEQNQWRSAREAVEDPKFWEMVDEEREAHLRGECHTCIYNMMGKREKKPGEFGKAKGSRAIWFMWLGARFLEFEALGFLNEDHWLGRKNSGGGVEGLGLQKLGYILREVGTRPGGKIYADDTAGWDTRITRADLENEAKVLELLDGEHRRLARAIIELTYRHKVVKVMRPAADGRTVMDVISREDQRGSGQVVTYALNTFTNLAVQLVRMMEGEGVIGPDDVEKLTKGKGPKVRTWLFENGEERLSRMAVSGDDCVVKPLDDRFATSLHFLNAMSKVRKDIQEWKPSTGWYDWQQVPFCSNHFTELIMKDGRTLVVPCRGQDELVGRARISPGAGWNVRDTACLAKSYAQMWLLLYFHRRDLRLMANAICSAVPVNWVPTGRTTWSIHAGGEWMTTEDMLEVWNRVWIEENEWMEDKTPVEKWSDVPYSGKREDIWCGSLIGTRARATWAENIQVAINQVRAIIGDEKYVDYMSSLKRYEDTTLVEDTVL</sequence>
<organismHost>
    <name type="scientific">Aedes</name>
    <dbReference type="NCBI Taxonomy" id="7158"/>
</organismHost>
<organismHost>
    <name type="scientific">Alligator</name>
    <dbReference type="NCBI Taxonomy" id="8495"/>
</organismHost>
<organismHost>
    <name type="scientific">Amblyomma variegatum</name>
    <name type="common">Tropical bont tick</name>
    <dbReference type="NCBI Taxonomy" id="34610"/>
</organismHost>
<organismHost>
    <name type="scientific">Aves</name>
    <dbReference type="NCBI Taxonomy" id="8782"/>
</organismHost>
<organismHost>
    <name type="scientific">Culex</name>
    <dbReference type="NCBI Taxonomy" id="53527"/>
</organismHost>
<organismHost>
    <name type="scientific">Equus caballus</name>
    <name type="common">Horse</name>
    <dbReference type="NCBI Taxonomy" id="9796"/>
</organismHost>
<organismHost>
    <name type="scientific">Homo sapiens</name>
    <name type="common">Human</name>
    <dbReference type="NCBI Taxonomy" id="9606"/>
</organismHost>
<organismHost>
    <name type="scientific">Hyalomma marginatum</name>
    <dbReference type="NCBI Taxonomy" id="34627"/>
</organismHost>
<organismHost>
    <name type="scientific">Mansonia uniformis</name>
    <dbReference type="NCBI Taxonomy" id="308735"/>
</organismHost>
<organismHost>
    <name type="scientific">Mimomyia</name>
    <dbReference type="NCBI Taxonomy" id="308737"/>
</organismHost>
<organismHost>
    <name type="scientific">Rhipicephalus</name>
    <dbReference type="NCBI Taxonomy" id="34630"/>
</organismHost>
<organismHost>
    <name type="scientific">Sciurus niger</name>
    <name type="common">Eastern fox squirrel</name>
    <dbReference type="NCBI Taxonomy" id="34861"/>
</organismHost>
<organism>
    <name type="scientific">West Nile virus (strain NY-99)</name>
    <name type="common">WNV</name>
    <name type="synonym">West Nile virus (strain NY-1999)</name>
    <dbReference type="NCBI Taxonomy" id="1968826"/>
    <lineage>
        <taxon>Viruses</taxon>
        <taxon>Riboviria</taxon>
        <taxon>Orthornavirae</taxon>
        <taxon>Kitrinoviricota</taxon>
        <taxon>Flasuviricetes</taxon>
        <taxon>Amarillovirales</taxon>
        <taxon>Flaviviridae</taxon>
        <taxon>Orthoflavivirus</taxon>
        <taxon>Orthoflavivirus nilense</taxon>
    </lineage>
</organism>
<gene>
    <name evidence="39" type="primary">GP1</name>
    <name evidence="39" type="ORF">MZ11_60484gpGP1</name>
    <name evidence="40" type="ORF">MZ11_60553gpGP1</name>
</gene>
<feature type="chain" id="PRO_0000441576" description="Genome polyprotein">
    <location>
        <begin position="1"/>
        <end position="3433"/>
    </location>
</feature>
<feature type="chain" id="PRO_0000441577" description="Capsid protein C" evidence="2">
    <location>
        <begin position="1"/>
        <end position="105"/>
    </location>
</feature>
<feature type="propeptide" id="PRO_0000441578" description="ER anchor for the capsid protein C, removed in mature form by serine protease NS3" evidence="2">
    <location>
        <begin position="106"/>
        <end position="123"/>
    </location>
</feature>
<feature type="chain" id="PRO_0000441579" description="Protein prM" evidence="2">
    <location>
        <begin position="124"/>
        <end position="290"/>
    </location>
</feature>
<feature type="chain" id="PRO_0000441580" description="Peptide pr" evidence="2">
    <location>
        <begin position="124"/>
        <end position="215"/>
    </location>
</feature>
<feature type="chain" id="PRO_0000441581" description="Small envelope protein M" evidence="2">
    <location>
        <begin position="216"/>
        <end position="290"/>
    </location>
</feature>
<feature type="chain" id="PRO_0000441582" description="Envelope protein E" evidence="2">
    <location>
        <begin position="291"/>
        <end position="791"/>
    </location>
</feature>
<feature type="chain" id="PRO_0000441583" description="Non-structural protein 1" evidence="2">
    <location>
        <begin position="792"/>
        <end position="1143"/>
    </location>
</feature>
<feature type="chain" id="PRO_0000441584" description="Non-structural protein 2A" evidence="2">
    <location>
        <begin position="1144"/>
        <end position="1374"/>
    </location>
</feature>
<feature type="chain" id="PRO_0000441585" description="Serine protease subunit NS2B" evidence="2">
    <location>
        <begin position="1375"/>
        <end position="1505"/>
    </location>
</feature>
<feature type="chain" id="PRO_0000441586" description="Serine protease/Helicase NS3" evidence="2">
    <location>
        <begin position="1506"/>
        <end position="2124"/>
    </location>
</feature>
<feature type="chain" id="PRO_0000441587" description="Non-structural protein 4A" evidence="2">
    <location>
        <begin position="2125"/>
        <end position="2250"/>
    </location>
</feature>
<feature type="peptide" id="PRO_0000441588" description="Peptide 2k" evidence="2">
    <location>
        <begin position="2251"/>
        <end position="2273"/>
    </location>
</feature>
<feature type="chain" id="PRO_0000441589" description="Non-structural protein 4B" evidence="2">
    <location>
        <begin position="2274"/>
        <end position="2528"/>
    </location>
</feature>
<feature type="chain" id="PRO_0000441590" description="RNA-directed RNA polymerase NS5" evidence="2">
    <location>
        <begin position="2529"/>
        <end position="3433"/>
    </location>
</feature>
<feature type="topological domain" description="Cytoplasmic" evidence="9">
    <location>
        <begin position="2"/>
        <end position="108"/>
    </location>
</feature>
<feature type="transmembrane region" description="Helical" evidence="9">
    <location>
        <begin position="109"/>
        <end position="129"/>
    </location>
</feature>
<feature type="topological domain" description="Extracellular" evidence="9">
    <location>
        <begin position="130"/>
        <end position="248"/>
    </location>
</feature>
<feature type="transmembrane region" description="Helical" evidence="9">
    <location>
        <begin position="249"/>
        <end position="269"/>
    </location>
</feature>
<feature type="topological domain" description="Cytoplasmic" evidence="9">
    <location>
        <begin position="270"/>
        <end position="275"/>
    </location>
</feature>
<feature type="transmembrane region" description="Helical" evidence="38">
    <location>
        <begin position="276"/>
        <end position="290"/>
    </location>
</feature>
<feature type="topological domain" description="Extracellular" evidence="9">
    <location>
        <begin position="291"/>
        <end position="743"/>
    </location>
</feature>
<feature type="transmembrane region" description="Helical" evidence="9">
    <location>
        <begin position="744"/>
        <end position="764"/>
    </location>
</feature>
<feature type="topological domain" description="Cytoplasmic" evidence="9">
    <location>
        <begin position="765"/>
        <end position="770"/>
    </location>
</feature>
<feature type="transmembrane region" description="Helical" evidence="9">
    <location>
        <begin position="771"/>
        <end position="791"/>
    </location>
</feature>
<feature type="topological domain" description="Extracellular" evidence="9">
    <location>
        <begin position="792"/>
        <end position="1216"/>
    </location>
</feature>
<feature type="transmembrane region" description="Helical" evidence="9">
    <location>
        <begin position="1217"/>
        <end position="1237"/>
    </location>
</feature>
<feature type="topological domain" description="Cytoplasmic" evidence="9">
    <location>
        <begin position="1238"/>
        <end position="1245"/>
    </location>
</feature>
<feature type="transmembrane region" description="Helical" evidence="9">
    <location>
        <begin position="1246"/>
        <end position="1268"/>
    </location>
</feature>
<feature type="topological domain" description="Lumenal" evidence="9">
    <location>
        <begin position="1269"/>
        <end position="1288"/>
    </location>
</feature>
<feature type="transmembrane region" description="Helical" evidence="9">
    <location>
        <begin position="1289"/>
        <end position="1309"/>
    </location>
</feature>
<feature type="topological domain" description="Cytoplasmic" evidence="9">
    <location>
        <begin position="1310"/>
        <end position="1313"/>
    </location>
</feature>
<feature type="transmembrane region" description="Helical" evidence="9">
    <location>
        <begin position="1314"/>
        <end position="1331"/>
    </location>
</feature>
<feature type="topological domain" description="Lumenal" evidence="9">
    <location>
        <begin position="1332"/>
        <end position="1345"/>
    </location>
</feature>
<feature type="transmembrane region" description="Helical" evidence="9">
    <location>
        <begin position="1346"/>
        <end position="1366"/>
    </location>
</feature>
<feature type="topological domain" description="Cytoplasmic" evidence="9">
    <location>
        <begin position="1367"/>
        <end position="1375"/>
    </location>
</feature>
<feature type="transmembrane region" description="Helical" evidence="9">
    <location>
        <begin position="1376"/>
        <end position="1396"/>
    </location>
</feature>
<feature type="topological domain" description="Lumenal" evidence="9">
    <location>
        <begin position="1397"/>
        <end position="1399"/>
    </location>
</feature>
<feature type="transmembrane region" description="Helical" evidence="9">
    <location>
        <begin position="1400"/>
        <end position="1420"/>
    </location>
</feature>
<feature type="topological domain" description="Cytoplasmic" evidence="9">
    <location>
        <begin position="1421"/>
        <end position="1477"/>
    </location>
</feature>
<feature type="intramembrane region" description="Helical" evidence="9">
    <location>
        <begin position="1478"/>
        <end position="1498"/>
    </location>
</feature>
<feature type="topological domain" description="Cytoplasmic" evidence="9">
    <location>
        <begin position="1499"/>
        <end position="2174"/>
    </location>
</feature>
<feature type="transmembrane region" description="Helical" evidence="9">
    <location>
        <begin position="2175"/>
        <end position="2195"/>
    </location>
</feature>
<feature type="topological domain" description="Lumenal" evidence="9">
    <location>
        <begin position="2196"/>
        <end position="2200"/>
    </location>
</feature>
<feature type="intramembrane region" description="Helical" evidence="9">
    <location>
        <begin position="2201"/>
        <end position="2221"/>
    </location>
</feature>
<feature type="topological domain" description="Lumenal" evidence="9">
    <location>
        <position position="2222"/>
    </location>
</feature>
<feature type="transmembrane region" description="Helical" evidence="9">
    <location>
        <begin position="2223"/>
        <end position="2243"/>
    </location>
</feature>
<feature type="topological domain" description="Cytoplasmic" evidence="9">
    <location>
        <begin position="2244"/>
        <end position="2258"/>
    </location>
</feature>
<feature type="transmembrane region" description="Helical; Note=Signal for NS4B" evidence="9">
    <location>
        <begin position="2259"/>
        <end position="2279"/>
    </location>
</feature>
<feature type="topological domain" description="Lumenal" evidence="9">
    <location>
        <begin position="2280"/>
        <end position="2312"/>
    </location>
</feature>
<feature type="intramembrane region" description="Helical" evidence="9">
    <location>
        <begin position="2313"/>
        <end position="2333"/>
    </location>
</feature>
<feature type="topological domain" description="Lumenal" evidence="9">
    <location>
        <begin position="2334"/>
        <end position="2380"/>
    </location>
</feature>
<feature type="transmembrane region" description="Helical" evidence="9">
    <location>
        <begin position="2381"/>
        <end position="2401"/>
    </location>
</feature>
<feature type="topological domain" description="Cytoplasmic" evidence="9">
    <location>
        <begin position="2402"/>
        <end position="2444"/>
    </location>
</feature>
<feature type="transmembrane region" description="Helical" evidence="9">
    <location>
        <begin position="2445"/>
        <end position="2465"/>
    </location>
</feature>
<feature type="topological domain" description="Lumenal" evidence="9">
    <location>
        <begin position="2466"/>
        <end position="2470"/>
    </location>
</feature>
<feature type="transmembrane region" description="Helical" evidence="9">
    <location>
        <begin position="2471"/>
        <end position="2491"/>
    </location>
</feature>
<feature type="topological domain" description="Cytoplasmic" evidence="9">
    <location>
        <begin position="2492"/>
        <end position="3433"/>
    </location>
</feature>
<feature type="domain" description="Peptidase S7" evidence="14">
    <location>
        <begin position="1506"/>
        <end position="1683"/>
    </location>
</feature>
<feature type="domain" description="Helicase ATP-binding" evidence="11">
    <location>
        <begin position="1686"/>
        <end position="1842"/>
    </location>
</feature>
<feature type="domain" description="Helicase C-terminal" evidence="12">
    <location>
        <begin position="1853"/>
        <end position="2018"/>
    </location>
</feature>
<feature type="domain" description="mRNA cap 0-1 NS5-type MT" evidence="15">
    <location>
        <begin position="2529"/>
        <end position="2794"/>
    </location>
</feature>
<feature type="domain" description="RdRp catalytic" evidence="10">
    <location>
        <begin position="3058"/>
        <end position="3210"/>
    </location>
</feature>
<feature type="region of interest" description="Interaction with host EXOC1" evidence="2">
    <location>
        <begin position="2"/>
        <end position="15"/>
    </location>
</feature>
<feature type="region of interest" description="Hydrophobic; homodimerization of capsid protein C" evidence="7">
    <location>
        <begin position="37"/>
        <end position="72"/>
    </location>
</feature>
<feature type="region of interest" description="Fusion peptide" evidence="4">
    <location>
        <begin position="388"/>
        <end position="401"/>
    </location>
</feature>
<feature type="region of interest" description="Interacts with and activates NS3 protease" evidence="13">
    <location>
        <begin position="1428"/>
        <end position="1467"/>
    </location>
</feature>
<feature type="region of interest" description="Important for RNA-binding" evidence="5">
    <location>
        <begin position="1690"/>
        <end position="1693"/>
    </location>
</feature>
<feature type="region of interest" description="Regulates the ATPase activity of NS3 helicase" evidence="20">
    <location>
        <begin position="2169"/>
        <end position="2173"/>
    </location>
</feature>
<feature type="short sequence motif" description="DEAH box" evidence="11">
    <location>
        <begin position="1790"/>
        <end position="1793"/>
    </location>
</feature>
<feature type="short sequence motif" description="Nuclear localization signal" evidence="3">
    <location>
        <begin position="2917"/>
        <end position="2919"/>
    </location>
</feature>
<feature type="short sequence motif" description="PDZ-binding" evidence="2">
    <location>
        <begin position="3431"/>
        <end position="3433"/>
    </location>
</feature>
<feature type="active site" description="Charge relay system; for serine protease NS3 activity" evidence="14">
    <location>
        <position position="1556"/>
    </location>
</feature>
<feature type="active site" description="Charge relay system; for serine protease NS3 activity" evidence="14">
    <location>
        <position position="1580"/>
    </location>
</feature>
<feature type="active site" description="Charge relay system; for serine protease NS3 activity" evidence="14">
    <location>
        <position position="1640"/>
    </location>
</feature>
<feature type="active site" description="For 2'-O-MTase activity" evidence="19">
    <location>
        <position position="2589"/>
    </location>
</feature>
<feature type="active site" description="For 2'-O-MTase activity" evidence="19">
    <location>
        <position position="2674"/>
    </location>
</feature>
<feature type="active site" description="For 2'-O-MTase activity" evidence="19">
    <location>
        <position position="2710"/>
    </location>
</feature>
<feature type="active site" description="For 2'-O-MTase activity" evidence="19">
    <location>
        <position position="2746"/>
    </location>
</feature>
<feature type="binding site" evidence="11">
    <location>
        <begin position="1699"/>
        <end position="1706"/>
    </location>
    <ligand>
        <name>ATP</name>
        <dbReference type="ChEBI" id="CHEBI:30616"/>
    </ligand>
</feature>
<feature type="binding site" evidence="15 19">
    <location>
        <position position="2584"/>
    </location>
    <ligand>
        <name>S-adenosyl-L-methionine</name>
        <dbReference type="ChEBI" id="CHEBI:59789"/>
    </ligand>
</feature>
<feature type="binding site" evidence="15 41">
    <location>
        <position position="2614"/>
    </location>
    <ligand>
        <name>S-adenosyl-L-methionine</name>
        <dbReference type="ChEBI" id="CHEBI:59789"/>
    </ligand>
</feature>
<feature type="binding site" evidence="15 41">
    <location>
        <position position="2615"/>
    </location>
    <ligand>
        <name>S-adenosyl-L-methionine</name>
        <dbReference type="ChEBI" id="CHEBI:59789"/>
    </ligand>
</feature>
<feature type="binding site" evidence="15">
    <location>
        <position position="2632"/>
    </location>
    <ligand>
        <name>S-adenosyl-L-methionine</name>
        <dbReference type="ChEBI" id="CHEBI:59789"/>
    </ligand>
</feature>
<feature type="binding site" evidence="15">
    <location>
        <position position="2633"/>
    </location>
    <ligand>
        <name>S-adenosyl-L-methionine</name>
        <dbReference type="ChEBI" id="CHEBI:59789"/>
    </ligand>
</feature>
<feature type="binding site" evidence="19">
    <location>
        <position position="2639"/>
    </location>
    <ligand>
        <name>S-adenosyl-L-methionine</name>
        <dbReference type="ChEBI" id="CHEBI:59789"/>
    </ligand>
</feature>
<feature type="binding site" evidence="15 41">
    <location>
        <position position="2659"/>
    </location>
    <ligand>
        <name>S-adenosyl-L-methionine</name>
        <dbReference type="ChEBI" id="CHEBI:59789"/>
    </ligand>
</feature>
<feature type="binding site" evidence="15 41">
    <location>
        <position position="2660"/>
    </location>
    <ligand>
        <name>S-adenosyl-L-methionine</name>
        <dbReference type="ChEBI" id="CHEBI:59789"/>
    </ligand>
</feature>
<feature type="binding site" evidence="19">
    <location>
        <position position="2674"/>
    </location>
    <ligand>
        <name>S-adenosyl-L-methionine</name>
        <dbReference type="ChEBI" id="CHEBI:59789"/>
    </ligand>
</feature>
<feature type="binding site" evidence="15">
    <location>
        <position position="2675"/>
    </location>
    <ligand>
        <name>S-adenosyl-L-methionine</name>
        <dbReference type="ChEBI" id="CHEBI:59789"/>
    </ligand>
</feature>
<feature type="binding site" evidence="15">
    <location>
        <position position="2748"/>
    </location>
    <ligand>
        <name>S-adenosyl-L-methionine</name>
        <dbReference type="ChEBI" id="CHEBI:59789"/>
    </ligand>
</feature>
<feature type="binding site" evidence="3">
    <location>
        <position position="2968"/>
    </location>
    <ligand>
        <name>Zn(2+)</name>
        <dbReference type="ChEBI" id="CHEBI:29105"/>
        <label>1</label>
    </ligand>
</feature>
<feature type="binding site" evidence="3">
    <location>
        <position position="2972"/>
    </location>
    <ligand>
        <name>Zn(2+)</name>
        <dbReference type="ChEBI" id="CHEBI:29105"/>
        <label>1</label>
    </ligand>
</feature>
<feature type="binding site" evidence="3">
    <location>
        <position position="2977"/>
    </location>
    <ligand>
        <name>Zn(2+)</name>
        <dbReference type="ChEBI" id="CHEBI:29105"/>
        <label>1</label>
    </ligand>
</feature>
<feature type="binding site" evidence="3">
    <location>
        <position position="2980"/>
    </location>
    <ligand>
        <name>Zn(2+)</name>
        <dbReference type="ChEBI" id="CHEBI:29105"/>
        <label>1</label>
    </ligand>
</feature>
<feature type="binding site" evidence="3">
    <location>
        <position position="3245"/>
    </location>
    <ligand>
        <name>Zn(2+)</name>
        <dbReference type="ChEBI" id="CHEBI:29105"/>
        <label>2</label>
    </ligand>
</feature>
<feature type="binding site" evidence="3">
    <location>
        <position position="3261"/>
    </location>
    <ligand>
        <name>Zn(2+)</name>
        <dbReference type="ChEBI" id="CHEBI:29105"/>
        <label>2</label>
    </ligand>
</feature>
<feature type="binding site" evidence="3">
    <location>
        <position position="3380"/>
    </location>
    <ligand>
        <name>Zn(2+)</name>
        <dbReference type="ChEBI" id="CHEBI:29105"/>
        <label>2</label>
    </ligand>
</feature>
<feature type="site" description="Cleavage; by viral protease NS3" evidence="2">
    <location>
        <begin position="105"/>
        <end position="106"/>
    </location>
</feature>
<feature type="site" description="Cleavage; by host signal peptidase" evidence="2">
    <location>
        <begin position="123"/>
        <end position="124"/>
    </location>
</feature>
<feature type="site" description="Cleavage; by host furin" evidence="2">
    <location>
        <begin position="215"/>
        <end position="216"/>
    </location>
</feature>
<feature type="site" description="Cleavage; by host signal peptidase" evidence="2">
    <location>
        <begin position="290"/>
        <end position="291"/>
    </location>
</feature>
<feature type="site" description="Cleavage; by host signal peptidase" evidence="2">
    <location>
        <begin position="791"/>
        <end position="792"/>
    </location>
</feature>
<feature type="site" description="Cleavage; by host" evidence="2">
    <location>
        <begin position="1143"/>
        <end position="1144"/>
    </location>
</feature>
<feature type="site" description="Cleavage; by viral protease NS3" evidence="2">
    <location>
        <begin position="1374"/>
        <end position="1375"/>
    </location>
</feature>
<feature type="site" description="Cleavage; by autolysis" evidence="2">
    <location>
        <begin position="1505"/>
        <end position="1506"/>
    </location>
</feature>
<feature type="site" description="Inhibition of host STAT1 phosphorylation" evidence="34">
    <location>
        <position position="1754"/>
    </location>
</feature>
<feature type="site" description="Involved in NS3 ATPase and RTPase activities" evidence="3">
    <location>
        <position position="1963"/>
    </location>
</feature>
<feature type="site" description="Involved in NS3 ATPase and RTPase activities" evidence="3">
    <location>
        <position position="1966"/>
    </location>
</feature>
<feature type="site" description="Inhibition of host STAT1 phosphorylation" evidence="34">
    <location>
        <position position="1991"/>
    </location>
</feature>
<feature type="site" description="Cleavage; by autolysis" evidence="2">
    <location>
        <begin position="2124"/>
        <end position="2125"/>
    </location>
</feature>
<feature type="site" description="Cleavage; by viral protease NS3" evidence="2">
    <location>
        <begin position="2250"/>
        <end position="2251"/>
    </location>
</feature>
<feature type="site" description="Cleavage; by host signal peptidase" evidence="2">
    <location>
        <begin position="2273"/>
        <end position="2274"/>
    </location>
</feature>
<feature type="site" description="Cleavage; by viral protease NS3" evidence="2">
    <location>
        <begin position="2528"/>
        <end position="2529"/>
    </location>
</feature>
<feature type="site" description="mRNA cap binding" evidence="15">
    <location>
        <position position="2541"/>
    </location>
</feature>
<feature type="site" description="mRNA cap binding; via carbonyl oxygen" evidence="15">
    <location>
        <position position="2544"/>
    </location>
</feature>
<feature type="site" description="mRNA cap binding" evidence="15">
    <location>
        <position position="2545"/>
    </location>
</feature>
<feature type="site" description="mRNA cap binding; via carbonyl oxygen" evidence="15">
    <location>
        <position position="2547"/>
    </location>
</feature>
<feature type="site" description="mRNA cap binding" evidence="15 19">
    <location>
        <position position="2552"/>
    </location>
</feature>
<feature type="site" description="mRNA cap binding" evidence="15">
    <location>
        <position position="2556"/>
    </location>
</feature>
<feature type="site" description="Essential for 2'-O-methyltransferase activity" evidence="15">
    <location>
        <position position="2589"/>
    </location>
</feature>
<feature type="site" description="Essential for 2'-O-methyltransferase and N-7 methyltransferase activity" evidence="15">
    <location>
        <position position="2674"/>
    </location>
</feature>
<feature type="site" description="mRNA cap binding" evidence="15">
    <location>
        <position position="2678"/>
    </location>
</feature>
<feature type="site" description="Essential for 2'-O-methyltransferase activity" evidence="15">
    <location>
        <position position="2710"/>
    </location>
</feature>
<feature type="site" description="mRNA cap binding" evidence="15">
    <location>
        <position position="2741"/>
    </location>
</feature>
<feature type="site" description="mRNA cap binding" evidence="15">
    <location>
        <position position="2743"/>
    </location>
</feature>
<feature type="site" description="Essential for 2'-O-methyltransferase activity" evidence="15">
    <location>
        <position position="2746"/>
    </location>
</feature>
<feature type="modified residue" description="N6-acetyllysine; by host" evidence="8">
    <location>
        <position position="1894"/>
    </location>
</feature>
<feature type="modified residue" description="Phosphoserine" evidence="1">
    <location>
        <position position="2584"/>
    </location>
</feature>
<feature type="glycosylation site" description="N-linked (GlcNAc...) asparagine; by host" evidence="3">
    <location>
        <position position="138"/>
    </location>
</feature>
<feature type="glycosylation site" description="N-linked (GlcNAc...) asparagine; by host" evidence="37">
    <location>
        <position position="444"/>
    </location>
</feature>
<feature type="glycosylation site" description="N-linked (GlcNAc...) asparagine; by host" evidence="30">
    <location>
        <position position="921"/>
    </location>
</feature>
<feature type="glycosylation site" description="N-linked (GlcNAc...) asparagine; by host" evidence="30">
    <location>
        <position position="966"/>
    </location>
</feature>
<feature type="glycosylation site" description="N-linked (GlcNAc...) asparagine; by host" evidence="30">
    <location>
        <position position="998"/>
    </location>
</feature>
<feature type="disulfide bond" evidence="25">
    <location>
        <begin position="293"/>
        <end position="320"/>
    </location>
</feature>
<feature type="disulfide bond" evidence="21 25">
    <location>
        <begin position="350"/>
        <end position="411"/>
    </location>
</feature>
<feature type="disulfide bond" evidence="2">
    <location>
        <begin position="350"/>
        <end position="406"/>
    </location>
</feature>
<feature type="disulfide bond" evidence="21 25">
    <location>
        <begin position="364"/>
        <end position="395"/>
    </location>
</feature>
<feature type="disulfide bond" evidence="2">
    <location>
        <begin position="382"/>
        <end position="411"/>
    </location>
</feature>
<feature type="disulfide bond" evidence="21 25">
    <location>
        <begin position="382"/>
        <end position="406"/>
    </location>
</feature>
<feature type="disulfide bond" evidence="21 25">
    <location>
        <begin position="480"/>
        <end position="578"/>
    </location>
</feature>
<feature type="disulfide bond" evidence="25">
    <location>
        <begin position="595"/>
        <end position="626"/>
    </location>
</feature>
<feature type="disulfide bond" evidence="30">
    <location>
        <begin position="795"/>
        <end position="806"/>
    </location>
</feature>
<feature type="disulfide bond" evidence="30">
    <location>
        <begin position="846"/>
        <end position="934"/>
    </location>
</feature>
<feature type="disulfide bond" evidence="30 31">
    <location>
        <begin position="970"/>
        <end position="1014"/>
    </location>
</feature>
<feature type="disulfide bond" evidence="30 31">
    <location>
        <begin position="1071"/>
        <end position="1120"/>
    </location>
</feature>
<feature type="disulfide bond" evidence="30 31">
    <location>
        <begin position="1082"/>
        <end position="1103"/>
    </location>
</feature>
<feature type="disulfide bond" evidence="30 31">
    <location>
        <begin position="1104"/>
        <end position="1107"/>
    </location>
</feature>
<feature type="mutagenesis site" description="Complete loss of glycosylation. Attenuated phenotype." evidence="37">
    <original>N</original>
    <variation>K</variation>
    <variation>S</variation>
    <location>
        <position position="444"/>
    </location>
</feature>
<feature type="mutagenesis site" description="Complete loss of glycosylation." evidence="37">
    <original>S</original>
    <variation>F</variation>
    <location>
        <position position="446"/>
    </location>
</feature>
<feature type="mutagenesis site" description="Complete loss of glycosylation. Attenuated phenotype." evidence="37">
    <original>S</original>
    <variation>P</variation>
    <location>
        <position position="446"/>
    </location>
</feature>
<feature type="mutagenesis site" description="No effect on glycosylation. No effect on avian virulence properties as NYS, but enhanced host oral infectivity." evidence="37">
    <original>S</original>
    <variation>T</variation>
    <location>
        <position position="446"/>
    </location>
</feature>
<feature type="mutagenesis site" description="No effect on TL3 signaling inhibition by NS1." evidence="32">
    <original>T</original>
    <variation>N</variation>
    <location>
        <position position="968"/>
    </location>
</feature>
<feature type="mutagenesis site" description="No effect on TL3 signaling inhibition by NS1." evidence="32">
    <original>N</original>
    <variation>I</variation>
    <location>
        <position position="982"/>
    </location>
</feature>
<feature type="mutagenesis site" description="No effect on TL3 signaling inhibition by NS1." evidence="32">
    <original>E</original>
    <variation>V</variation>
    <location>
        <position position="1029"/>
    </location>
</feature>
<feature type="mutagenesis site" description="Complete loss of TL3 signaling inhibition by NS1." evidence="32">
    <original>N</original>
    <variation>D</variation>
    <location>
        <position position="1046"/>
    </location>
</feature>
<feature type="mutagenesis site" description="Almost no effect on TL3 signaling inhibition by NS1." evidence="32">
    <original>G</original>
    <variation>R</variation>
    <location>
        <position position="1086"/>
    </location>
</feature>
<feature type="mutagenesis site" description="Complete loss of TL3 signaling inhibition by NS1." evidence="32">
    <original>T</original>
    <variation>I</variation>
    <location>
        <position position="1108"/>
    </location>
</feature>
<feature type="mutagenesis site" description="About 50% loss of TL3 signaling inhibition by NS1." evidence="32">
    <original>P</original>
    <variation>S</variation>
    <location>
        <position position="1111"/>
    </location>
</feature>
<feature type="mutagenesis site" description="About 50% loss of TL3 signaling inhibition by NS1." evidence="32">
    <original>M</original>
    <variation>V</variation>
    <location>
        <position position="1124"/>
    </location>
</feature>
<feature type="mutagenesis site" description="Complete loss of regulation of the ATPase activity of NS3 helicase by NS4A." evidence="20">
    <original>EELPD</original>
    <variation>KKLPK</variation>
    <location>
        <begin position="2169"/>
        <end position="2173"/>
    </location>
</feature>
<feature type="mutagenesis site" description="85% loss of NS5-GMP formation." evidence="22">
    <original>K</original>
    <variation>A</variation>
    <location>
        <position position="2557"/>
    </location>
</feature>
<feature type="mutagenesis site" description="Complete loss of 2'-O-methyltransferase activity." evidence="19">
    <original>K</original>
    <variation>A</variation>
    <variation>E</variation>
    <variation>R</variation>
    <location>
        <position position="2589"/>
    </location>
</feature>
<feature type="mutagenesis site" description="Complete loss of 2'-O-methyltransferase activity." evidence="19">
    <original>D</original>
    <variation>A</variation>
    <variation>N</variation>
    <variation>K</variation>
    <location>
        <position position="2674"/>
    </location>
</feature>
<feature type="mutagenesis site" description="86% loss of N7 guanine methyltransferase activity; 60% loss of 2'-O-methyltransferase activity." evidence="24">
    <original>G</original>
    <variation>A</variation>
    <location>
        <position position="2676"/>
    </location>
</feature>
<feature type="mutagenesis site" description="78% loss of N7 guanine methyltransferase activity; no effect 2'-O-methyltransferase activity." evidence="24">
    <original>R</original>
    <variation>A</variation>
    <location>
        <position position="2688"/>
    </location>
</feature>
<feature type="mutagenesis site" description="50% loss of N7 guanine methyltransferase activity; no effect 2'-O-methyltransferase activity." evidence="24">
    <original>R</original>
    <variation>A</variation>
    <location>
        <position position="2691"/>
    </location>
</feature>
<feature type="mutagenesis site" description="10% loss of N7 guanine methyltransferase activity; 50% loss of 2'-O-methyltransferase activity." evidence="24">
    <original>V</original>
    <variation>A</variation>
    <location>
        <position position="2692"/>
    </location>
</feature>
<feature type="mutagenesis site" description="Complete loss of 2'-O-methyltransferase activity." evidence="19">
    <original>K</original>
    <variation>A</variation>
    <variation>E</variation>
    <variation>N</variation>
    <location>
        <position position="2710"/>
    </location>
</feature>
<feature type="mutagenesis site" description="20% loss of N7 guanine methyltransferase activity7; 74% loss of 2'-O-methyltransferase activity." evidence="24">
    <original>L</original>
    <variation>A</variation>
    <location>
        <position position="2712"/>
    </location>
</feature>
<feature type="mutagenesis site" description="Complete loss of 2'-O-methyltransferase activity." evidence="19">
    <original>E</original>
    <variation>A</variation>
    <variation>D</variation>
    <variation>K</variation>
    <location>
        <position position="2746"/>
    </location>
</feature>
<feature type="strand" evidence="56">
    <location>
        <begin position="297"/>
        <end position="303"/>
    </location>
</feature>
<feature type="strand" evidence="56">
    <location>
        <begin position="309"/>
        <end position="316"/>
    </location>
</feature>
<feature type="strand" evidence="56">
    <location>
        <begin position="320"/>
        <end position="324"/>
    </location>
</feature>
<feature type="strand" evidence="51">
    <location>
        <begin position="326"/>
        <end position="328"/>
    </location>
</feature>
<feature type="strand" evidence="56">
    <location>
        <begin position="331"/>
        <end position="342"/>
    </location>
</feature>
<feature type="strand" evidence="56">
    <location>
        <begin position="344"/>
        <end position="362"/>
    </location>
</feature>
<feature type="strand" evidence="51">
    <location>
        <begin position="365"/>
        <end position="367"/>
    </location>
</feature>
<feature type="helix" evidence="56">
    <location>
        <begin position="373"/>
        <end position="376"/>
    </location>
</feature>
<feature type="strand" evidence="56">
    <location>
        <begin position="380"/>
        <end position="389"/>
    </location>
</feature>
<feature type="helix" evidence="56">
    <location>
        <begin position="391"/>
        <end position="393"/>
    </location>
</feature>
<feature type="strand" evidence="56">
    <location>
        <begin position="399"/>
        <end position="419"/>
    </location>
</feature>
<feature type="helix" evidence="56">
    <location>
        <begin position="422"/>
        <end position="424"/>
    </location>
</feature>
<feature type="strand" evidence="56">
    <location>
        <begin position="425"/>
        <end position="433"/>
    </location>
</feature>
<feature type="helix" evidence="56">
    <location>
        <begin position="439"/>
        <end position="442"/>
    </location>
</feature>
<feature type="helix" evidence="56">
    <location>
        <begin position="445"/>
        <end position="450"/>
    </location>
</feature>
<feature type="strand" evidence="56">
    <location>
        <begin position="453"/>
        <end position="459"/>
    </location>
</feature>
<feature type="strand" evidence="56">
    <location>
        <begin position="461"/>
        <end position="463"/>
    </location>
</feature>
<feature type="strand" evidence="56">
    <location>
        <begin position="465"/>
        <end position="469"/>
    </location>
</feature>
<feature type="helix" evidence="56">
    <location>
        <begin position="471"/>
        <end position="473"/>
    </location>
</feature>
<feature type="strand" evidence="56">
    <location>
        <begin position="474"/>
        <end position="481"/>
    </location>
</feature>
<feature type="strand" evidence="51">
    <location>
        <begin position="484"/>
        <end position="486"/>
    </location>
</feature>
<feature type="strand" evidence="56">
    <location>
        <begin position="490"/>
        <end position="496"/>
    </location>
</feature>
<feature type="strand" evidence="56">
    <location>
        <begin position="499"/>
        <end position="504"/>
    </location>
</feature>
<feature type="helix" evidence="56">
    <location>
        <begin position="505"/>
        <end position="509"/>
    </location>
</feature>
<feature type="helix" evidence="56">
    <location>
        <begin position="526"/>
        <end position="529"/>
    </location>
</feature>
<feature type="strand" evidence="56">
    <location>
        <begin position="530"/>
        <end position="532"/>
    </location>
</feature>
<feature type="strand" evidence="56">
    <location>
        <begin position="542"/>
        <end position="544"/>
    </location>
</feature>
<feature type="helix" evidence="56">
    <location>
        <begin position="549"/>
        <end position="555"/>
    </location>
</feature>
<feature type="strand" evidence="56">
    <location>
        <begin position="557"/>
        <end position="562"/>
    </location>
</feature>
<feature type="strand" evidence="56">
    <location>
        <begin position="568"/>
        <end position="570"/>
    </location>
</feature>
<feature type="strand" evidence="56">
    <location>
        <begin position="575"/>
        <end position="581"/>
    </location>
</feature>
<feature type="helix" evidence="51">
    <location>
        <begin position="582"/>
        <end position="584"/>
    </location>
</feature>
<feature type="strand" evidence="56">
    <location>
        <begin position="599"/>
        <end position="601"/>
    </location>
</feature>
<feature type="strand" evidence="56">
    <location>
        <begin position="609"/>
        <end position="611"/>
    </location>
</feature>
<feature type="strand" evidence="56">
    <location>
        <begin position="613"/>
        <end position="619"/>
    </location>
</feature>
<feature type="strand" evidence="56">
    <location>
        <begin position="623"/>
        <end position="627"/>
    </location>
</feature>
<feature type="strand" evidence="56">
    <location>
        <begin position="630"/>
        <end position="635"/>
    </location>
</feature>
<feature type="strand" evidence="56">
    <location>
        <begin position="642"/>
        <end position="647"/>
    </location>
</feature>
<feature type="strand" evidence="56">
    <location>
        <begin position="655"/>
        <end position="666"/>
    </location>
</feature>
<feature type="strand" evidence="56">
    <location>
        <begin position="669"/>
        <end position="678"/>
    </location>
</feature>
<feature type="helix" evidence="56">
    <location>
        <begin position="679"/>
        <end position="681"/>
    </location>
</feature>
<feature type="strand" evidence="56">
    <location>
        <begin position="683"/>
        <end position="689"/>
    </location>
</feature>
<feature type="strand" evidence="54">
    <location>
        <begin position="792"/>
        <end position="798"/>
    </location>
</feature>
<feature type="helix" evidence="54">
    <location>
        <begin position="799"/>
        <end position="801"/>
    </location>
</feature>
<feature type="strand" evidence="54">
    <location>
        <begin position="803"/>
        <end position="813"/>
    </location>
</feature>
<feature type="turn" evidence="54">
    <location>
        <begin position="816"/>
        <end position="818"/>
    </location>
</feature>
<feature type="helix" evidence="54">
    <location>
        <begin position="819"/>
        <end position="822"/>
    </location>
</feature>
<feature type="strand" evidence="54">
    <location>
        <begin position="823"/>
        <end position="828"/>
    </location>
</feature>
<feature type="helix" evidence="54">
    <location>
        <begin position="830"/>
        <end position="841"/>
    </location>
</feature>
<feature type="turn" evidence="54">
    <location>
        <begin position="842"/>
        <end position="844"/>
    </location>
</feature>
<feature type="helix" evidence="54">
    <location>
        <begin position="853"/>
        <end position="872"/>
    </location>
</feature>
<feature type="strand" evidence="54">
    <location>
        <begin position="878"/>
        <end position="881"/>
    </location>
</feature>
<feature type="strand" evidence="54">
    <location>
        <begin position="922"/>
        <end position="927"/>
    </location>
</feature>
<feature type="strand" evidence="54">
    <location>
        <begin position="932"/>
        <end position="934"/>
    </location>
</feature>
<feature type="helix" evidence="54">
    <location>
        <begin position="936"/>
        <end position="938"/>
    </location>
</feature>
<feature type="strand" evidence="54">
    <location>
        <begin position="944"/>
        <end position="950"/>
    </location>
</feature>
<feature type="strand" evidence="54">
    <location>
        <begin position="956"/>
        <end position="962"/>
    </location>
</feature>
<feature type="helix" evidence="54">
    <location>
        <begin position="972"/>
        <end position="974"/>
    </location>
</feature>
<feature type="strand" evidence="55">
    <location>
        <begin position="975"/>
        <end position="980"/>
    </location>
</feature>
<feature type="strand" evidence="55">
    <location>
        <begin position="983"/>
        <end position="1010"/>
    </location>
</feature>
<feature type="helix" evidence="55">
    <location>
        <begin position="1018"/>
        <end position="1020"/>
    </location>
</feature>
<feature type="helix" evidence="55">
    <location>
        <begin position="1029"/>
        <end position="1031"/>
    </location>
</feature>
<feature type="helix" evidence="55">
    <location>
        <begin position="1036"/>
        <end position="1038"/>
    </location>
</feature>
<feature type="strand" evidence="55">
    <location>
        <begin position="1061"/>
        <end position="1069"/>
    </location>
</feature>
<feature type="strand" evidence="55">
    <location>
        <begin position="1075"/>
        <end position="1078"/>
    </location>
</feature>
<feature type="strand" evidence="53">
    <location>
        <begin position="1080"/>
        <end position="1082"/>
    </location>
</feature>
<feature type="strand" evidence="55">
    <location>
        <begin position="1089"/>
        <end position="1092"/>
    </location>
</feature>
<feature type="strand" evidence="54">
    <location>
        <begin position="1094"/>
        <end position="1096"/>
    </location>
</feature>
<feature type="strand" evidence="55">
    <location>
        <begin position="1101"/>
        <end position="1106"/>
    </location>
</feature>
<feature type="strand" evidence="55">
    <location>
        <begin position="1112"/>
        <end position="1116"/>
    </location>
</feature>
<feature type="strand" evidence="55">
    <location>
        <begin position="1119"/>
        <end position="1122"/>
    </location>
</feature>
<feature type="strand" evidence="55">
    <location>
        <begin position="1126"/>
        <end position="1129"/>
    </location>
</feature>
<feature type="helix" evidence="52">
    <location>
        <begin position="2536"/>
        <end position="2544"/>
    </location>
</feature>
<feature type="helix" evidence="52">
    <location>
        <begin position="2549"/>
        <end position="2555"/>
    </location>
</feature>
<feature type="turn" evidence="52">
    <location>
        <begin position="2556"/>
        <end position="2559"/>
    </location>
</feature>
<feature type="strand" evidence="52">
    <location>
        <begin position="2561"/>
        <end position="2563"/>
    </location>
</feature>
<feature type="helix" evidence="52">
    <location>
        <begin position="2566"/>
        <end position="2574"/>
    </location>
</feature>
<feature type="strand" evidence="50">
    <location>
        <begin position="2583"/>
        <end position="2585"/>
    </location>
</feature>
<feature type="helix" evidence="52">
    <location>
        <begin position="2586"/>
        <end position="2595"/>
    </location>
</feature>
<feature type="strand" evidence="52">
    <location>
        <begin position="2603"/>
        <end position="2608"/>
    </location>
</feature>
<feature type="helix" evidence="52">
    <location>
        <begin position="2614"/>
        <end position="2619"/>
    </location>
</feature>
<feature type="strand" evidence="52">
    <location>
        <begin position="2625"/>
        <end position="2631"/>
    </location>
</feature>
<feature type="helix" evidence="52">
    <location>
        <begin position="2649"/>
        <end position="2651"/>
    </location>
</feature>
<feature type="strand" evidence="52">
    <location>
        <begin position="2652"/>
        <end position="2655"/>
    </location>
</feature>
<feature type="turn" evidence="50">
    <location>
        <begin position="2660"/>
        <end position="2662"/>
    </location>
</feature>
<feature type="strand" evidence="52">
    <location>
        <begin position="2669"/>
        <end position="2673"/>
    </location>
</feature>
<feature type="helix" evidence="52">
    <location>
        <begin position="2682"/>
        <end position="2700"/>
    </location>
</feature>
<feature type="strand" evidence="52">
    <location>
        <begin position="2706"/>
        <end position="2712"/>
    </location>
</feature>
<feature type="helix" evidence="52">
    <location>
        <begin position="2717"/>
        <end position="2730"/>
    </location>
</feature>
<feature type="strand" evidence="52">
    <location>
        <begin position="2733"/>
        <end position="2735"/>
    </location>
</feature>
<feature type="strand" evidence="52">
    <location>
        <begin position="2747"/>
        <end position="2750"/>
    </location>
</feature>
<feature type="helix" evidence="52">
    <location>
        <begin position="2757"/>
        <end position="2770"/>
    </location>
</feature>
<feature type="strand" evidence="52">
    <location>
        <begin position="2781"/>
        <end position="2783"/>
    </location>
</feature>
<keyword id="KW-0002">3D-structure</keyword>
<keyword id="KW-0007">Acetylation</keyword>
<keyword id="KW-1072">Activation of host autophagy by virus</keyword>
<keyword id="KW-0067">ATP-binding</keyword>
<keyword id="KW-0167">Capsid protein</keyword>
<keyword id="KW-1015">Disulfide bond</keyword>
<keyword id="KW-1170">Fusion of virus membrane with host endosomal membrane</keyword>
<keyword id="KW-1168">Fusion of virus membrane with host membrane</keyword>
<keyword id="KW-0325">Glycoprotein</keyword>
<keyword id="KW-0347">Helicase</keyword>
<keyword id="KW-1035">Host cytoplasm</keyword>
<keyword id="KW-1038">Host endoplasmic reticulum</keyword>
<keyword id="KW-1043">Host membrane</keyword>
<keyword id="KW-1048">Host nucleus</keyword>
<keyword id="KW-0945">Host-virus interaction</keyword>
<keyword id="KW-0378">Hydrolase</keyword>
<keyword id="KW-1090">Inhibition of host innate immune response by virus</keyword>
<keyword id="KW-1114">Inhibition of host interferon signaling pathway by virus</keyword>
<keyword id="KW-1105">Inhibition of host STAT1 by virus</keyword>
<keyword id="KW-1106">Inhibition of host STAT2 by virus</keyword>
<keyword id="KW-0922">Interferon antiviral system evasion</keyword>
<keyword id="KW-0472">Membrane</keyword>
<keyword id="KW-0479">Metal-binding</keyword>
<keyword id="KW-0489">Methyltransferase</keyword>
<keyword id="KW-0506">mRNA capping</keyword>
<keyword id="KW-0507">mRNA processing</keyword>
<keyword id="KW-0547">Nucleotide-binding</keyword>
<keyword id="KW-0548">Nucleotidyltransferase</keyword>
<keyword id="KW-0597">Phosphoprotein</keyword>
<keyword id="KW-0645">Protease</keyword>
<keyword id="KW-0694">RNA-binding</keyword>
<keyword id="KW-0696">RNA-directed RNA polymerase</keyword>
<keyword id="KW-0949">S-adenosyl-L-methionine</keyword>
<keyword id="KW-0964">Secreted</keyword>
<keyword id="KW-0720">Serine protease</keyword>
<keyword id="KW-0941">Suppressor of RNA silencing</keyword>
<keyword id="KW-0808">Transferase</keyword>
<keyword id="KW-0812">Transmembrane</keyword>
<keyword id="KW-1133">Transmembrane helix</keyword>
<keyword id="KW-1161">Viral attachment to host cell</keyword>
<keyword id="KW-0899">Viral immunoevasion</keyword>
<keyword id="KW-1162">Viral penetration into host cytoplasm</keyword>
<keyword id="KW-0693">Viral RNA replication</keyword>
<keyword id="KW-0946">Virion</keyword>
<keyword id="KW-1160">Virus entry into host cell</keyword>
<keyword id="KW-0862">Zinc</keyword>
<protein>
    <recommendedName>
        <fullName>Genome polyprotein</fullName>
    </recommendedName>
    <component>
        <recommendedName>
            <fullName>Peptide 2k</fullName>
        </recommendedName>
    </component>
    <component>
        <recommendedName>
            <fullName>Capsid protein C</fullName>
        </recommendedName>
        <alternativeName>
            <fullName>Core protein</fullName>
        </alternativeName>
    </component>
    <component>
        <recommendedName>
            <fullName>Protein prM</fullName>
        </recommendedName>
    </component>
    <component>
        <recommendedName>
            <fullName>Peptide pr</fullName>
        </recommendedName>
    </component>
    <component>
        <recommendedName>
            <fullName>Small envelope protein M</fullName>
        </recommendedName>
        <alternativeName>
            <fullName>Matrix protein</fullName>
        </alternativeName>
    </component>
    <component>
        <recommendedName>
            <fullName>Envelope protein E</fullName>
        </recommendedName>
    </component>
    <component>
        <recommendedName>
            <fullName>Non-structural protein 1</fullName>
            <shortName>NS1</shortName>
        </recommendedName>
    </component>
    <component>
        <recommendedName>
            <fullName>Non-structural protein 2A</fullName>
            <shortName>NS2A</shortName>
        </recommendedName>
    </component>
    <component>
        <recommendedName>
            <fullName>Serine protease subunit NS2B</fullName>
        </recommendedName>
        <alternativeName>
            <fullName>Flavivirin protease NS2B regulatory subunit</fullName>
        </alternativeName>
        <alternativeName>
            <fullName>Non-structural protein 2B</fullName>
        </alternativeName>
    </component>
    <component>
        <recommendedName>
            <fullName>Serine protease/Helicase NS3</fullName>
            <ecNumber>3.4.21.91</ecNumber>
            <ecNumber evidence="20">3.6.1.15</ecNumber>
            <ecNumber evidence="20">3.6.4.13</ecNumber>
        </recommendedName>
        <alternativeName>
            <fullName>Flavivirin protease NS3 catalytic subunit</fullName>
        </alternativeName>
        <alternativeName>
            <fullName>Non-structural protein 3</fullName>
        </alternativeName>
    </component>
    <component>
        <recommendedName>
            <fullName>Non-structural protein 4A</fullName>
            <shortName>NS4A</shortName>
        </recommendedName>
    </component>
    <component>
        <recommendedName>
            <fullName>Non-structural protein 4B</fullName>
            <shortName>NS4B</shortName>
        </recommendedName>
    </component>
    <component>
        <recommendedName>
            <fullName>RNA-directed RNA polymerase NS5</fullName>
            <ecNumber evidence="15 22 24">2.1.1.56</ecNumber>
            <ecNumber evidence="15 22 24">2.1.1.57</ecNumber>
            <ecNumber evidence="10">2.7.7.48</ecNumber>
        </recommendedName>
        <alternativeName>
            <fullName>NS5</fullName>
        </alternativeName>
    </component>
</protein>
<proteinExistence type="evidence at protein level"/>
<reference key="1">
    <citation type="journal article" date="1999" name="Science">
        <title>Origin of the West Nile virus responsible for an outbreak of encephalitis in the northeastern United States.</title>
        <authorList>
            <person name="Lanciotti R.S."/>
            <person name="Roehrig J.T."/>
            <person name="Deubel V."/>
            <person name="Smith J."/>
            <person name="Parker M."/>
            <person name="Steele K."/>
            <person name="Crise B."/>
            <person name="Volpe K.E."/>
            <person name="Crabtree M.B."/>
            <person name="Scherret J.H."/>
            <person name="Hall R.A."/>
            <person name="MacKenzie J.S."/>
            <person name="Cropp C.B."/>
            <person name="Panigrahy B."/>
            <person name="Ostlund E."/>
            <person name="Schmitt B."/>
            <person name="Malkinson M."/>
            <person name="Banet C."/>
            <person name="Weissman J."/>
            <person name="Komar N."/>
            <person name="Savage H.M."/>
            <person name="Stone W."/>
            <person name="McNamara T."/>
            <person name="Gubler D.J."/>
        </authorList>
    </citation>
    <scope>NUCLEOTIDE SEQUENCE [LARGE SCALE GENOMIC RNA]</scope>
    <source>
        <strain>Isolate US/NY99-flamingo382/1999</strain>
    </source>
</reference>
<reference key="2">
    <citation type="journal article" date="2002" name="Virology">
        <title>Complete genome sequences and phylogenetic analysis of West Nile virus strains isolated from the United States, Europe, and the Middle East.</title>
        <authorList>
            <person name="Lanciotti R.S."/>
            <person name="Ebel G.D."/>
            <person name="Deubel V."/>
            <person name="Kerst A.J."/>
            <person name="Murri S."/>
            <person name="Meyer R."/>
            <person name="Bowen M."/>
            <person name="McKinney N."/>
            <person name="Morrill W.E."/>
            <person name="Crabtree M.B."/>
            <person name="Kramer L.D."/>
            <person name="Roehrig J.T."/>
        </authorList>
    </citation>
    <scope>NUCLEOTIDE SEQUENCE [LARGE SCALE GENOMIC RNA]</scope>
    <source>
        <strain>Isolate US/NY2000-grouse3282/2000</strain>
    </source>
</reference>
<reference key="3">
    <citation type="journal article" date="2004" name="J. Gen. Virol.">
        <title>Viral envelope protein glycosylation is a molecular determinant of the neuroinvasiveness of the New York strain of West Nile virus.</title>
        <authorList>
            <person name="Shirato K."/>
            <person name="Miyoshi H."/>
            <person name="Goto A."/>
            <person name="Ako Y."/>
            <person name="Ueki T."/>
            <person name="Kariwa H."/>
            <person name="Takashima I."/>
        </authorList>
    </citation>
    <scope>NUCLEOTIDE SEQUENCE [LARGE SCALE GENOMIC RNA]</scope>
    <source>
        <strain>Isolate US/NY99-6922/1999</strain>
    </source>
</reference>
<reference key="4">
    <citation type="journal article" date="2011" name="Virology">
        <title>Molecular evolution of West Nile virus in a northern temperate region: Connecticut, USA 1999-2008.</title>
        <authorList>
            <person name="Armstrong P.M."/>
            <person name="Vossbrinck C.R."/>
            <person name="Andreadis T.G."/>
            <person name="Anderson J.F."/>
            <person name="Pesko K.N."/>
            <person name="Newman R.M."/>
            <person name="Lennon N.J."/>
            <person name="Birren B.W."/>
            <person name="Ebel G.D."/>
            <person name="Henn M.R."/>
        </authorList>
    </citation>
    <scope>NUCLEOTIDE SEQUENCE [LARGE SCALE GENOMIC RNA]</scope>
    <source>
        <strain>NV-1/US/BID-V4187/1999</strain>
        <strain>US/BID-V4186/1999</strain>
        <strain>US/BID-V4188/1999</strain>
        <strain>US/BID-V4189/1999</strain>
    </source>
</reference>
<reference key="5">
    <citation type="submission" date="2012-12" db="EMBL/GenBank/DDBJ databases">
        <authorList>
            <person name="Gao Y.W."/>
            <person name="Fan S.T."/>
            <person name="Sun H.T."/>
            <person name="Wang Z."/>
            <person name="Gao X.L."/>
            <person name="Li Y.G."/>
            <person name="Wang T.C."/>
            <person name="Zhang K."/>
            <person name="Xu W.W."/>
            <person name="Yu Z.J."/>
            <person name="Xia X.Z."/>
        </authorList>
    </citation>
    <scope>NUCLEOTIDE SEQUENCE [LARGE SCALE GENOMIC RNA]</scope>
</reference>
<reference key="6">
    <citation type="journal article" date="2014" name="Genome Announc.">
        <title>Complete genome sequence of West Nile virus strains used for the formulation of CBER/FDA RNA reference reagents and lot release panels for nucleic acid testing.</title>
        <authorList>
            <person name="Grinev A."/>
            <person name="Anez G."/>
            <person name="Rios M."/>
        </authorList>
    </citation>
    <scope>NUCLEOTIDE SEQUENCE [LARGE SCALE GENOMIC RNA]</scope>
    <source>
        <strain>US/NY99-P2/1999</strain>
    </source>
</reference>
<reference key="7">
    <citation type="submission" date="2016-07" db="EMBL/GenBank/DDBJ databases">
        <authorList>
            <person name="Florea S."/>
            <person name="Webb J.S."/>
            <person name="Jaromczyk J."/>
            <person name="Schardl C.L."/>
        </authorList>
    </citation>
    <scope>NUCLEOTIDE SEQUENCE [LARGE SCALE GENOMIC RNA]</scope>
    <source>
        <strain>Culex/USA/29000529/2000</strain>
        <strain>Culex/USA/33020090/2002</strain>
    </source>
</reference>
<reference key="8">
    <citation type="journal article" date="2005" name="J. Virol.">
        <title>Inhibition of alpha/beta interferon signaling by the NS4B protein of flaviviruses.</title>
        <authorList>
            <person name="Munoz-Jordan J.L."/>
            <person name="Laurent-Rolle M."/>
            <person name="Ashour J."/>
            <person name="Martinez-Sobrido L."/>
            <person name="Ashok M."/>
            <person name="Lipkin W.I."/>
            <person name="Garcia-Sastre A."/>
        </authorList>
    </citation>
    <scope>FUNCTION (NON-STRUCTURAL PROTEIN 4B)</scope>
</reference>
<reference key="9">
    <citation type="journal article" date="2005" name="J. Virol.">
        <title>West Nile virus inhibits the signal transduction pathway of alpha interferon.</title>
        <authorList>
            <person name="Guo J.T."/>
            <person name="Hayashi J."/>
            <person name="Seeger C."/>
        </authorList>
    </citation>
    <scope>FUNCTION (RNA-DIRECTED RNA POLYMERASE NS5)</scope>
</reference>
<reference key="10">
    <citation type="journal article" date="2006" name="Proc. Natl. Acad. Sci. U.S.A.">
        <title>West Nile virus nonstructural protein NS1 inhibits complement activation by binding the regulatory protein factor H.</title>
        <authorList>
            <person name="Chung K.M."/>
            <person name="Liszewski M.K."/>
            <person name="Nybakken G."/>
            <person name="Davis A.E."/>
            <person name="Townsend R.R."/>
            <person name="Fremont D.H."/>
            <person name="Atkinson J.P."/>
            <person name="Diamond M.S."/>
        </authorList>
    </citation>
    <scope>FUNCTION (NON-STRUCTURAL PROTEIN 1)</scope>
    <scope>INTERACTION WITH HOST COMPLEMENT REGULATORY PROTEIN FACTOR H (NON-STRUCTURAL PROTEIN 1)</scope>
</reference>
<reference key="11">
    <citation type="journal article" date="2009" name="J. Gen. Virol.">
        <title>NS4A regulates the ATPase activity of the NS3 helicase: a novel cofactor role of the non-structural protein NS4A from West Nile virus.</title>
        <authorList>
            <person name="Shiryaev S.A."/>
            <person name="Chernov A.V."/>
            <person name="Aleshin A.E."/>
            <person name="Shiryaeva T.N."/>
            <person name="Strongin A.Y."/>
        </authorList>
    </citation>
    <scope>FUNCTION (NON-STRUCTURAL PROTEIN 4A)</scope>
    <scope>CATALYTIC ACTIVITY (SERINE PROTEASE/HELICASE NS3)</scope>
    <scope>MUTAGENESIS OF 2169-GLU--ASP-2173</scope>
</reference>
<reference key="12">
    <citation type="journal article" date="2009" name="RNA">
        <title>The flavivirus NS5 protein is a true RNA guanylyltransferase that catalyzes a two-step reaction to form the RNA cap structure.</title>
        <authorList>
            <person name="Issur M."/>
            <person name="Geiss B.J."/>
            <person name="Bougie I."/>
            <person name="Picard-Jean F."/>
            <person name="Despins S."/>
            <person name="Mayette J."/>
            <person name="Hobdey S.E."/>
            <person name="Bisaillon M."/>
        </authorList>
    </citation>
    <scope>FUNCTION (RNA-DIRECTED RNA POLYMERASE NS5)</scope>
    <scope>CATALYTIC ACTIVITY (RNA-DIRECTED RNA POLYMERASE NS5)</scope>
    <scope>MUTAGENESIS OF LYS-2557</scope>
</reference>
<reference key="13">
    <citation type="journal article" date="2010" name="J. Virol.">
        <title>The NS5 protein of the virulent West Nile virus NY99 strain is a potent antagonist of type I interferon-mediated JAK-STAT signaling.</title>
        <authorList>
            <person name="Laurent-Rolle M."/>
            <person name="Boer E.F."/>
            <person name="Lubick K.J."/>
            <person name="Wolfinbarger J.B."/>
            <person name="Carmody A.B."/>
            <person name="Rockx B."/>
            <person name="Liu W."/>
            <person name="Ashour J."/>
            <person name="Shupert W.L."/>
            <person name="Holbrook M.R."/>
            <person name="Barrett A.D."/>
            <person name="Mason P.W."/>
            <person name="Bloom M.E."/>
            <person name="Garcia-Sastre A."/>
            <person name="Khromykh A.A."/>
            <person name="Best S.M."/>
        </authorList>
    </citation>
    <scope>FUNCTION (RNA-DIRECTED RNA POLYMERASE NS5)</scope>
</reference>
<reference key="14">
    <citation type="journal article" date="2012" name="J. Virol.">
        <title>Evidence for a genetic and physical interaction between nonstructural proteins NS1 and NS4B that modulates replication of West Nile virus.</title>
        <authorList>
            <person name="Youn S."/>
            <person name="Li T."/>
            <person name="McCune B.T."/>
            <person name="Edeling M.A."/>
            <person name="Fremont D.H."/>
            <person name="Cristea I.M."/>
            <person name="Diamond M.S."/>
        </authorList>
    </citation>
    <scope>INTERACTION WITH NON-STRUCTURAL PROTEIN 4B (NON-STRUCTURAL PROTEIN 1)</scope>
    <scope>INTERACTION WITH NON-STRUCTURAL PROTEIN 1 (NON-STRUCTURAL PROTEIN 4B)</scope>
</reference>
<reference key="15">
    <citation type="journal article" date="2012" name="Virology">
        <title>The helicase activity of DDX56 is required for its role in assembly of infectious West Nile virus particles.</title>
        <authorList>
            <person name="Xu Z."/>
            <person name="Hobman T.C."/>
        </authorList>
    </citation>
    <scope>FUNCTION (CAPSID PROTEIN C)</scope>
    <scope>INTERACTION WITH HOST DDX56 (CAPSID PROTEIN C)</scope>
    <scope>SUBCELLULAR LOCATION (CAPSID PROTEIN C)</scope>
</reference>
<reference key="16">
    <citation type="journal article" date="2013" name="Virol. J.">
        <title>Non-structural protein-1 is required for West Nile virus replication complex formation and viral RNA synthesis.</title>
        <authorList>
            <person name="Youn S."/>
            <person name="Ambrose R.L."/>
            <person name="Mackenzie J.M."/>
            <person name="Diamond M.S."/>
        </authorList>
    </citation>
    <scope>FUNCTION (NON-STRUCTURAL PROTEIN 1)</scope>
</reference>
<reference key="17">
    <citation type="journal article" date="2014" name="PLoS ONE">
        <title>Induction of endoplasmic reticulum-derived replication-competent membrane structures by West Nile virus non-structural protein 4B.</title>
        <authorList>
            <person name="Kaufusi P.H."/>
            <person name="Kelley J.F."/>
            <person name="Yanagihara R."/>
            <person name="Nerurkar V.R."/>
        </authorList>
    </citation>
    <scope>FUNCTION (NON-STRUCTURAL PROTEIN 4B)</scope>
    <scope>SUBCELLULAR LOCATION (NON-STRUCTURAL PROTEIN 4B)</scope>
    <scope>SUBCELLULAR LOCATION (NON-STRUCTURAL PROTEIN 1)</scope>
    <scope>SUBCELLULAR LOCATION (NON-STRUCTURAL PROTEIN 4A)</scope>
    <scope>FUNCTION (NON-STRUCTURAL PROTEIN 1)</scope>
</reference>
<reference key="18">
    <citation type="journal article" date="2014" name="Virology">
        <title>Abrogation of TLR3 inhibition by discrete amino acid changes in the C-terminal half of the West Nile virus NS1 protein.</title>
        <authorList>
            <person name="Morrison C.R."/>
            <person name="Scholle F."/>
        </authorList>
    </citation>
    <scope>FUNCTION (NON-STRUCTURAL PROTEIN 1)</scope>
    <scope>MUTAGENESIS OF THR-968; ASN-982; GLU-1029; ASN-1046; GLY-1086; THR-1108; PRO-1111 AND MET-1124</scope>
</reference>
<reference key="19">
    <citation type="journal article" date="2014" name="Virology">
        <title>Modulation of innate immune signaling by the secreted form of the West Nile virus NS1 glycoprotein.</title>
        <authorList>
            <person name="Crook K.R."/>
            <person name="Miller-Kittrell M."/>
            <person name="Morrison C.R."/>
            <person name="Scholle F."/>
        </authorList>
    </citation>
    <scope>FUNCTION (NON-STRUCTURAL PROTEIN 1)</scope>
    <scope>SUBCELLULAR LOCATION (NON-STRUCTURAL PROTEIN 1)</scope>
</reference>
<reference key="20">
    <citation type="journal article" date="2017" name="Cell Rep.">
        <title>The host protein reticulon 3.1A is utilized by flaviviruses to facilitate membrane remodelling.</title>
        <authorList>
            <person name="Aktepe T.E."/>
            <person name="Liebscher S."/>
            <person name="Prier J.E."/>
            <person name="Simmons C.P."/>
            <person name="Mackenzie J.M."/>
        </authorList>
    </citation>
    <scope>FUNCTION (NON-STRUCTURAL PROTEIN 4A)</scope>
    <scope>SUBCELLULAR LOCATION (NON-STRUCTURAL PROTEIN 4A)</scope>
    <scope>INTERACTION WITH HOST RTN3</scope>
</reference>
<reference key="21">
    <citation type="journal article" date="2017" name="Viruses">
        <title>Helicase Domain of West Nile Virus NS3 Protein Plays a Role in Inhibition of Type I Interferon Signalling.</title>
        <authorList>
            <person name="Setoh Y.X."/>
            <person name="Periasamy P."/>
            <person name="Peng N.Y.G."/>
            <person name="Amarilla A.A."/>
            <person name="Slonchak A."/>
            <person name="Khromykh A.A."/>
        </authorList>
    </citation>
    <scope>FUNCTION (SERINE PROTEASE/HELICASE NS3)</scope>
</reference>
<reference key="22">
    <citation type="journal article" date="2018" name="J. Virol.">
        <title>Host Factor SPCS1 Regulates the Replication of Japanese Encephalitis Virus through Interactions with Transmembrane Domains of NS2B.</title>
        <authorList>
            <person name="Ma L."/>
            <person name="Li F."/>
            <person name="Zhang J.W."/>
            <person name="Li W."/>
            <person name="Zhao D.M."/>
            <person name="Wang H."/>
            <person name="Hua R.H."/>
            <person name="Bu Z.G."/>
        </authorList>
    </citation>
    <scope>INTERACTION WITH HUMAN SPCS1</scope>
</reference>
<reference key="23">
    <citation type="journal article" date="2019" name="PLoS Negl. Trop. Dis.">
        <title>N-linked glycosylation of the West Nile virus envelope protein is not a requisite for avian virulence or vector competence.</title>
        <authorList>
            <person name="Maharaj P.D."/>
            <person name="Langevin S.A."/>
            <person name="Bolling B.G."/>
            <person name="Andrade C.C."/>
            <person name="Engle X.A."/>
            <person name="Ramey W.N."/>
            <person name="Bosco-Lauth A."/>
            <person name="Bowen R.A."/>
            <person name="Sanders T.A."/>
            <person name="Huang C.Y."/>
            <person name="Reisen W.K."/>
            <person name="Brault A.C."/>
        </authorList>
    </citation>
    <scope>MUTAGENESIS OF ASN-444 AND SER-446</scope>
    <scope>GLYCOSYLATION AT ASN-444</scope>
</reference>
<reference evidence="41" key="24">
    <citation type="journal article" date="2007" name="J. Virol.">
        <title>Structure and function of flavivirus NS5 methyltransferase.</title>
        <authorList>
            <person name="Zhou Y."/>
            <person name="Ray D."/>
            <person name="Zhao Y."/>
            <person name="Dong H."/>
            <person name="Ren S."/>
            <person name="Li Z."/>
            <person name="Guo Y."/>
            <person name="Bernard K.A."/>
            <person name="Shi P.-Y."/>
            <person name="Li H."/>
        </authorList>
    </citation>
    <scope>X-RAY CRYSTALLOGRAPHY (2.80 ANGSTROMS) OF 2534-2795 IN COMPLEX WITH S-ADENOSYL-L-HOMOCYSTEINE</scope>
    <scope>ACTIVE SITE</scope>
    <scope>MUTAGENESIS OF LYS-2589; ASP-2674; LYS-2710 AND GLU-2746</scope>
</reference>
<reference evidence="42" key="25">
    <citation type="journal article" date="2009" name="EMBO J.">
        <title>Structural basis for the preferential recognition of immature flaviviruses by a fusion-loop antibody.</title>
        <authorList>
            <person name="Cherrier M.V."/>
            <person name="Kaufmann B."/>
            <person name="Nybakken G.E."/>
            <person name="Lok S.M."/>
            <person name="Warren J.T."/>
            <person name="Chen B.R."/>
            <person name="Nelson C.A."/>
            <person name="Kostyuchenko V.A."/>
            <person name="Holdaway H.A."/>
            <person name="Chipman P.R."/>
            <person name="Kuhn R.J."/>
            <person name="Diamond M.S."/>
            <person name="Rossmann M.G."/>
            <person name="Fremont D.H."/>
        </authorList>
    </citation>
    <scope>X-RAY CRYSTALLOGRAPHY (3.00 ANGSTROMS) OF 291-692</scope>
    <scope>DISULFIDE BONDS</scope>
</reference>
<reference evidence="45" key="26">
    <citation type="journal article" date="2010" name="J. Biol. Chem.">
        <title>Structural and functional analyses of a conserved hydrophobic pocket of flavivirus methyltransferase.</title>
        <authorList>
            <person name="Dong H."/>
            <person name="Liu L."/>
            <person name="Zou G."/>
            <person name="Zhao Y."/>
            <person name="Li Z."/>
            <person name="Lim S.P."/>
            <person name="Shi P.Y."/>
            <person name="Li H."/>
        </authorList>
    </citation>
    <scope>X-RAY CRYSTALLOGRAPHY (2.00 ANGSTROMS) OF 2529-2828 IN COMPLEX WITH SIN INHIBITOR</scope>
    <scope>CATALYTIC ACTIVITY (RNA-DIRECTED RNA POLYMERASE NS5)</scope>
    <scope>FUNCTION (RNA-DIRECTED RNA POLYMERASE NS5)</scope>
    <scope>MUTAGENESIS OF GLY-2676; ARG-2688; ARG-2691; VAL-2692 AND LEU-2712</scope>
</reference>
<reference evidence="43" key="27">
    <citation type="journal article" date="2010" name="Proc. Natl. Acad. Sci. U.S.A.">
        <title>Neutralization of West Nile virus by cross-linking of its surface proteins with Fab fragments of the human monoclonal antibody CR4354.</title>
        <authorList>
            <person name="Kaufmann B."/>
            <person name="Vogt M.R."/>
            <person name="Goudsmit J."/>
            <person name="Holdaway H.A."/>
            <person name="Aksyuk A.A."/>
            <person name="Chipman P.R."/>
            <person name="Kuhn R.J."/>
            <person name="Diamond M.S."/>
            <person name="Rossmann M.G."/>
        </authorList>
    </citation>
    <scope>STRUCTURE BY ELECTRON MICROSCOPY (13.70 ANGSTROMS) OF 291-690</scope>
    <scope>DISULFIDE BONDS</scope>
    <scope>SUBUNIT (ENVELOPE PROTEIN E)</scope>
</reference>
<reference evidence="44" key="28">
    <citation type="journal article" date="2013" name="J. Struct. Biol.">
        <title>Membrane curvature in flaviviruses.</title>
        <authorList>
            <person name="Zhang W."/>
            <person name="Kaufmann B."/>
            <person name="Chipman P.R."/>
            <person name="Kuhn R.J."/>
            <person name="Rossmann M.G."/>
        </authorList>
    </citation>
    <scope>STRUCTURE BY ELECTRON MICROSCOPY (10.30 ANGSTROMS) OF 291-690</scope>
</reference>
<reference evidence="48 49" key="29">
    <citation type="journal article" date="2014" name="Proc. Natl. Acad. Sci. U.S.A.">
        <title>Structural basis of flavivirus NS1 assembly and antibody recognition.</title>
        <authorList>
            <person name="Edeling M.A."/>
            <person name="Diamond M.S."/>
            <person name="Fremont D.H."/>
        </authorList>
    </citation>
    <scope>X-RAY CRYSTALLOGRAPHY (1.85 ANGSTROMS) OF 963-1143</scope>
    <scope>DISULFIDE BONDS</scope>
    <scope>SUBUNIT (NON-STRUCTURAL PROTEIN 1)</scope>
</reference>
<reference evidence="46 47" key="30">
    <citation type="journal article" date="2014" name="Science">
        <title>Flavivirus NS1 structures reveal surfaces for associations with membranes and the immune system.</title>
        <authorList>
            <person name="Akey D.L."/>
            <person name="Brown W.C."/>
            <person name="Dutta S."/>
            <person name="Konwerski J."/>
            <person name="Jose J."/>
            <person name="Jurkiw T.J."/>
            <person name="DelProposto J."/>
            <person name="Ogata C.M."/>
            <person name="Skiniotis G."/>
            <person name="Kuhn R.J."/>
            <person name="Smith J.L."/>
        </authorList>
    </citation>
    <scope>X-RAY CRYSTALLOGRAPHY (2.59 ANGSTROMS) OF 791-1143</scope>
    <scope>GLYCOSYLATION AT ASN-921; ASN-966 AND ASN-998</scope>
    <scope>DISULFIDE BONDS</scope>
    <scope>SUBUNIT (NON-STRUCTURAL PROTEIN 1)</scope>
</reference>
<evidence type="ECO:0000250" key="1">
    <source>
        <dbReference type="UniProtKB" id="P03314"/>
    </source>
</evidence>
<evidence type="ECO:0000250" key="2">
    <source>
        <dbReference type="UniProtKB" id="P06935"/>
    </source>
</evidence>
<evidence type="ECO:0000250" key="3">
    <source>
        <dbReference type="UniProtKB" id="P14335"/>
    </source>
</evidence>
<evidence type="ECO:0000250" key="4">
    <source>
        <dbReference type="UniProtKB" id="P14336"/>
    </source>
</evidence>
<evidence type="ECO:0000250" key="5">
    <source>
        <dbReference type="UniProtKB" id="P14340"/>
    </source>
</evidence>
<evidence type="ECO:0000250" key="6">
    <source>
        <dbReference type="UniProtKB" id="P17763"/>
    </source>
</evidence>
<evidence type="ECO:0000250" key="7">
    <source>
        <dbReference type="UniProtKB" id="P29990"/>
    </source>
</evidence>
<evidence type="ECO:0000250" key="8">
    <source>
        <dbReference type="UniProtKB" id="Q32ZE1"/>
    </source>
</evidence>
<evidence type="ECO:0000255" key="9"/>
<evidence type="ECO:0000255" key="10">
    <source>
        <dbReference type="PROSITE-ProRule" id="PRU00539"/>
    </source>
</evidence>
<evidence type="ECO:0000255" key="11">
    <source>
        <dbReference type="PROSITE-ProRule" id="PRU00541"/>
    </source>
</evidence>
<evidence type="ECO:0000255" key="12">
    <source>
        <dbReference type="PROSITE-ProRule" id="PRU00542"/>
    </source>
</evidence>
<evidence type="ECO:0000255" key="13">
    <source>
        <dbReference type="PROSITE-ProRule" id="PRU00859"/>
    </source>
</evidence>
<evidence type="ECO:0000255" key="14">
    <source>
        <dbReference type="PROSITE-ProRule" id="PRU00860"/>
    </source>
</evidence>
<evidence type="ECO:0000255" key="15">
    <source>
        <dbReference type="PROSITE-ProRule" id="PRU00924"/>
    </source>
</evidence>
<evidence type="ECO:0000269" key="16">
    <source>
    </source>
</evidence>
<evidence type="ECO:0000269" key="17">
    <source>
    </source>
</evidence>
<evidence type="ECO:0000269" key="18">
    <source>
    </source>
</evidence>
<evidence type="ECO:0000269" key="19">
    <source>
    </source>
</evidence>
<evidence type="ECO:0000269" key="20">
    <source>
    </source>
</evidence>
<evidence type="ECO:0000269" key="21">
    <source>
    </source>
</evidence>
<evidence type="ECO:0000269" key="22">
    <source>
    </source>
</evidence>
<evidence type="ECO:0000269" key="23">
    <source>
    </source>
</evidence>
<evidence type="ECO:0000269" key="24">
    <source>
    </source>
</evidence>
<evidence type="ECO:0000269" key="25">
    <source>
    </source>
</evidence>
<evidence type="ECO:0000269" key="26">
    <source>
    </source>
</evidence>
<evidence type="ECO:0000269" key="27">
    <source>
    </source>
</evidence>
<evidence type="ECO:0000269" key="28">
    <source>
    </source>
</evidence>
<evidence type="ECO:0000269" key="29">
    <source>
    </source>
</evidence>
<evidence type="ECO:0000269" key="30">
    <source>
    </source>
</evidence>
<evidence type="ECO:0000269" key="31">
    <source>
    </source>
</evidence>
<evidence type="ECO:0000269" key="32">
    <source>
    </source>
</evidence>
<evidence type="ECO:0000269" key="33">
    <source>
    </source>
</evidence>
<evidence type="ECO:0000269" key="34">
    <source>
    </source>
</evidence>
<evidence type="ECO:0000269" key="35">
    <source>
    </source>
</evidence>
<evidence type="ECO:0000269" key="36">
    <source>
    </source>
</evidence>
<evidence type="ECO:0000269" key="37">
    <source>
    </source>
</evidence>
<evidence type="ECO:0000305" key="38"/>
<evidence type="ECO:0000312" key="39">
    <source>
        <dbReference type="EMBL" id="ANW69091.1"/>
    </source>
</evidence>
<evidence type="ECO:0000312" key="40">
    <source>
        <dbReference type="EMBL" id="ANW69112.1"/>
    </source>
</evidence>
<evidence type="ECO:0007744" key="41">
    <source>
        <dbReference type="PDB" id="2OY0"/>
    </source>
</evidence>
<evidence type="ECO:0007744" key="42">
    <source>
        <dbReference type="PDB" id="3I50"/>
    </source>
</evidence>
<evidence type="ECO:0007744" key="43">
    <source>
        <dbReference type="PDB" id="3IYW"/>
    </source>
</evidence>
<evidence type="ECO:0007744" key="44">
    <source>
        <dbReference type="PDB" id="3J0B"/>
    </source>
</evidence>
<evidence type="ECO:0007744" key="45">
    <source>
        <dbReference type="PDB" id="3LKZ"/>
    </source>
</evidence>
<evidence type="ECO:0007744" key="46">
    <source>
        <dbReference type="PDB" id="4O6C"/>
    </source>
</evidence>
<evidence type="ECO:0007744" key="47">
    <source>
        <dbReference type="PDB" id="4O6D"/>
    </source>
</evidence>
<evidence type="ECO:0007744" key="48">
    <source>
        <dbReference type="PDB" id="4OIE"/>
    </source>
</evidence>
<evidence type="ECO:0007744" key="49">
    <source>
        <dbReference type="PDB" id="4OII"/>
    </source>
</evidence>
<evidence type="ECO:0007829" key="50">
    <source>
        <dbReference type="PDB" id="2OY0"/>
    </source>
</evidence>
<evidence type="ECO:0007829" key="51">
    <source>
        <dbReference type="PDB" id="3I50"/>
    </source>
</evidence>
<evidence type="ECO:0007829" key="52">
    <source>
        <dbReference type="PDB" id="3LKZ"/>
    </source>
</evidence>
<evidence type="ECO:0007829" key="53">
    <source>
        <dbReference type="PDB" id="4O6C"/>
    </source>
</evidence>
<evidence type="ECO:0007829" key="54">
    <source>
        <dbReference type="PDB" id="4O6D"/>
    </source>
</evidence>
<evidence type="ECO:0007829" key="55">
    <source>
        <dbReference type="PDB" id="4OIE"/>
    </source>
</evidence>
<evidence type="ECO:0007829" key="56">
    <source>
        <dbReference type="PDB" id="7E4K"/>
    </source>
</evidence>
<name>POLG_WNV9</name>